<keyword id="KW-0002">3D-structure</keyword>
<keyword id="KW-0007">Acetylation</keyword>
<keyword id="KW-0963">Cytoplasm</keyword>
<keyword id="KW-0903">Direct protein sequencing</keyword>
<keyword id="KW-0539">Nucleus</keyword>
<keyword id="KW-0647">Proteasome</keyword>
<keyword id="KW-1185">Reference proteome</keyword>
<accession>P21242</accession>
<accession>D6W357</accession>
<name>PSA7_YEAST</name>
<reference key="1">
    <citation type="journal article" date="1990" name="J. Biol. Chem.">
        <title>Proteasomes are essential for yeast proliferation. cDNA cloning and gene disruption of two major subunits.</title>
        <authorList>
            <person name="Fujiwara T."/>
            <person name="Tanaka K."/>
            <person name="Orino E."/>
            <person name="Yoshimura T."/>
            <person name="Kumatori A."/>
            <person name="Tamura T."/>
            <person name="Chung C.H."/>
            <person name="Nakai T."/>
            <person name="Yamaguchi K."/>
            <person name="Shin S."/>
            <person name="Kakizuka A."/>
            <person name="Nakanishi S."/>
            <person name="Ichihara A."/>
        </authorList>
    </citation>
    <scope>NUCLEOTIDE SEQUENCE [MRNA]</scope>
    <scope>PROTEIN SEQUENCE OF 106-135; 180-195 AND 200-209</scope>
    <scope>CLEAVAGE OF INITIATOR METHIONINE</scope>
</reference>
<reference key="2">
    <citation type="journal article" date="1997" name="Nature">
        <title>The nucleotide sequence of Saccharomyces cerevisiae chromosome XV.</title>
        <authorList>
            <person name="Dujon B."/>
            <person name="Albermann K."/>
            <person name="Aldea M."/>
            <person name="Alexandraki D."/>
            <person name="Ansorge W."/>
            <person name="Arino J."/>
            <person name="Benes V."/>
            <person name="Bohn C."/>
            <person name="Bolotin-Fukuhara M."/>
            <person name="Bordonne R."/>
            <person name="Boyer J."/>
            <person name="Camasses A."/>
            <person name="Casamayor A."/>
            <person name="Casas C."/>
            <person name="Cheret G."/>
            <person name="Cziepluch C."/>
            <person name="Daignan-Fornier B."/>
            <person name="Dang V.-D."/>
            <person name="de Haan M."/>
            <person name="Delius H."/>
            <person name="Durand P."/>
            <person name="Fairhead C."/>
            <person name="Feldmann H."/>
            <person name="Gaillon L."/>
            <person name="Galisson F."/>
            <person name="Gamo F.-J."/>
            <person name="Gancedo C."/>
            <person name="Goffeau A."/>
            <person name="Goulding S.E."/>
            <person name="Grivell L.A."/>
            <person name="Habbig B."/>
            <person name="Hand N.J."/>
            <person name="Hani J."/>
            <person name="Hattenhorst U."/>
            <person name="Hebling U."/>
            <person name="Hernando Y."/>
            <person name="Herrero E."/>
            <person name="Heumann K."/>
            <person name="Hiesel R."/>
            <person name="Hilger F."/>
            <person name="Hofmann B."/>
            <person name="Hollenberg C.P."/>
            <person name="Hughes B."/>
            <person name="Jauniaux J.-C."/>
            <person name="Kalogeropoulos A."/>
            <person name="Katsoulou C."/>
            <person name="Kordes E."/>
            <person name="Lafuente M.J."/>
            <person name="Landt O."/>
            <person name="Louis E.J."/>
            <person name="Maarse A.C."/>
            <person name="Madania A."/>
            <person name="Mannhaupt G."/>
            <person name="Marck C."/>
            <person name="Martin R.P."/>
            <person name="Mewes H.-W."/>
            <person name="Michaux G."/>
            <person name="Paces V."/>
            <person name="Parle-McDermott A.G."/>
            <person name="Pearson B.M."/>
            <person name="Perrin A."/>
            <person name="Pettersson B."/>
            <person name="Poch O."/>
            <person name="Pohl T.M."/>
            <person name="Poirey R."/>
            <person name="Portetelle D."/>
            <person name="Pujol A."/>
            <person name="Purnelle B."/>
            <person name="Ramezani Rad M."/>
            <person name="Rechmann S."/>
            <person name="Schwager C."/>
            <person name="Schweizer M."/>
            <person name="Sor F."/>
            <person name="Sterky F."/>
            <person name="Tarassov I.A."/>
            <person name="Teodoru C."/>
            <person name="Tettelin H."/>
            <person name="Thierry A."/>
            <person name="Tobiasch E."/>
            <person name="Tzermia M."/>
            <person name="Uhlen M."/>
            <person name="Unseld M."/>
            <person name="Valens M."/>
            <person name="Vandenbol M."/>
            <person name="Vetter I."/>
            <person name="Vlcek C."/>
            <person name="Voet M."/>
            <person name="Volckaert G."/>
            <person name="Voss H."/>
            <person name="Wambutt R."/>
            <person name="Wedler H."/>
            <person name="Wiemann S."/>
            <person name="Winsor B."/>
            <person name="Wolfe K.H."/>
            <person name="Zollner A."/>
            <person name="Zumstein E."/>
            <person name="Kleine K."/>
        </authorList>
    </citation>
    <scope>NUCLEOTIDE SEQUENCE [LARGE SCALE GENOMIC DNA]</scope>
    <source>
        <strain>ATCC 204508 / S288c</strain>
    </source>
</reference>
<reference key="3">
    <citation type="journal article" date="2014" name="G3 (Bethesda)">
        <title>The reference genome sequence of Saccharomyces cerevisiae: Then and now.</title>
        <authorList>
            <person name="Engel S.R."/>
            <person name="Dietrich F.S."/>
            <person name="Fisk D.G."/>
            <person name="Binkley G."/>
            <person name="Balakrishnan R."/>
            <person name="Costanzo M.C."/>
            <person name="Dwight S.S."/>
            <person name="Hitz B.C."/>
            <person name="Karra K."/>
            <person name="Nash R.S."/>
            <person name="Weng S."/>
            <person name="Wong E.D."/>
            <person name="Lloyd P."/>
            <person name="Skrzypek M.S."/>
            <person name="Miyasato S.R."/>
            <person name="Simison M."/>
            <person name="Cherry J.M."/>
        </authorList>
    </citation>
    <scope>GENOME REANNOTATION</scope>
    <source>
        <strain>ATCC 204508 / S288c</strain>
    </source>
</reference>
<reference key="4">
    <citation type="journal article" date="2003" name="Nature">
        <title>Global analysis of protein expression in yeast.</title>
        <authorList>
            <person name="Ghaemmaghami S."/>
            <person name="Huh W.-K."/>
            <person name="Bower K."/>
            <person name="Howson R.W."/>
            <person name="Belle A."/>
            <person name="Dephoure N."/>
            <person name="O'Shea E.K."/>
            <person name="Weissman J.S."/>
        </authorList>
    </citation>
    <scope>LEVEL OF PROTEIN EXPRESSION [LARGE SCALE ANALYSIS]</scope>
</reference>
<reference key="5">
    <citation type="journal article" date="2008" name="Mol. Cell. Proteomics">
        <title>A multidimensional chromatography technology for in-depth phosphoproteome analysis.</title>
        <authorList>
            <person name="Albuquerque C.P."/>
            <person name="Smolka M.B."/>
            <person name="Payne S.H."/>
            <person name="Bafna V."/>
            <person name="Eng J."/>
            <person name="Zhou H."/>
        </authorList>
    </citation>
    <scope>IDENTIFICATION BY MASS SPECTROMETRY [LARGE SCALE ANALYSIS]</scope>
</reference>
<reference key="6">
    <citation type="journal article" date="2012" name="Proc. Natl. Acad. Sci. U.S.A.">
        <title>N-terminal acetylome analyses and functional insights of the N-terminal acetyltransferase NatB.</title>
        <authorList>
            <person name="Van Damme P."/>
            <person name="Lasa M."/>
            <person name="Polevoda B."/>
            <person name="Gazquez C."/>
            <person name="Elosegui-Artola A."/>
            <person name="Kim D.S."/>
            <person name="De Juan-Pardo E."/>
            <person name="Demeyer K."/>
            <person name="Hole K."/>
            <person name="Larrea E."/>
            <person name="Timmerman E."/>
            <person name="Prieto J."/>
            <person name="Arnesen T."/>
            <person name="Sherman F."/>
            <person name="Gevaert K."/>
            <person name="Aldabe R."/>
        </authorList>
    </citation>
    <scope>ACETYLATION [LARGE SCALE ANALYSIS] AT THR-2</scope>
    <scope>CLEAVAGE OF INITIATOR METHIONINE [LARGE SCALE ANALYSIS]</scope>
    <scope>IDENTIFICATION BY MASS SPECTROMETRY [LARGE SCALE ANALYSIS]</scope>
</reference>
<reference key="7">
    <citation type="journal article" date="1997" name="Nature">
        <title>Structure of 20S proteasome from yeast at 2.4-A resolution.</title>
        <authorList>
            <person name="Groll M."/>
            <person name="Ditzel L."/>
            <person name="Loewe J."/>
            <person name="Stock D."/>
            <person name="Bochtler M."/>
            <person name="Bartunik H.D."/>
            <person name="Huber R."/>
        </authorList>
    </citation>
    <scope>X-RAY CRYSTALLOGRAPHY (1.9 ANGSTROMS) OF 5-248 OF COMPLEX WITH THE 20S PROTEASOME</scope>
</reference>
<reference key="8">
    <citation type="journal article" date="2000" name="Nature">
        <title>Structural basis for the activation of 20S proteasomes by 11S regulators.</title>
        <authorList>
            <person name="Whitby F.G."/>
            <person name="Masters E.I."/>
            <person name="Kramer L."/>
            <person name="Knowlton J.R."/>
            <person name="Yao Y."/>
            <person name="Wang C.C."/>
            <person name="Hill C.P."/>
        </authorList>
    </citation>
    <scope>X-RAY CRYSTALLOGRAPHY (3.2 ANGSTROMS) OF 1-288 OF COMPLEX WITH THE 20S PROTEASOME AND A 11S REGULATORY COMPLEX</scope>
</reference>
<reference key="9">
    <citation type="journal article" date="2000" name="Nat. Struct. Biol.">
        <title>A gated channel into the proteasome core particle.</title>
        <authorList>
            <person name="Groll M."/>
            <person name="Bajorek M."/>
            <person name="Koehler A."/>
            <person name="Moroder L."/>
            <person name="Rubin D.M."/>
            <person name="Huber R."/>
            <person name="Glickman M.H."/>
            <person name="Finley D."/>
        </authorList>
    </citation>
    <scope>X-RAY CRYSTALLOGRAPHY (2.4 ANGSTROMS) OF 1-248 OF COMPLEX WITH THE 20S PROTEASOME</scope>
</reference>
<reference key="10">
    <citation type="journal article" date="2006" name="Chem. Biol.">
        <title>TMC-95-based inhibitor design provides evidence for the catalytic versatility of the proteasome.</title>
        <authorList>
            <person name="Groll M."/>
            <person name="Goetz M."/>
            <person name="Kaiser M."/>
            <person name="Weyher E."/>
            <person name="Moroder L."/>
        </authorList>
    </citation>
    <scope>X-RAY CRYSTALLOGRAPHY (2.81 ANGSTROMS) OF 5-248 OF COMPLEX WITH THE 20S PROTEASOME AND A TMC-95-BASED INHIBITOR</scope>
</reference>
<reference key="11">
    <citation type="journal article" date="2006" name="J. Am. Chem. Soc.">
        <title>Crystal structures of salinosporamide A (NPI-0052) and B (NPI-0047) in complex with the 20S proteasome reveal important consequences of beta-lactone ring opening and a mechanism for irreversible binding.</title>
        <authorList>
            <person name="Groll M."/>
            <person name="Huber R."/>
            <person name="Potts B.C.M."/>
        </authorList>
    </citation>
    <scope>X-RAY CRYSTALLOGRAPHY (2.8 ANGSTROMS) OF 5-248 OF COMPLEX WITH THE 20S PROTEASOME AND SALINOSPORAMIDE</scope>
</reference>
<reference key="12">
    <citation type="journal article" date="2006" name="Structure">
        <title>Crystal structure of the boronic acid-based proteasome inhibitor bortezomib in complex with the yeast 20S proteasome.</title>
        <authorList>
            <person name="Groll M."/>
            <person name="Berkers C.R."/>
            <person name="Ploegh H.L."/>
            <person name="Ovaa H."/>
        </authorList>
    </citation>
    <scope>X-RAY CRYSTALLOGRAPHY (2.8 ANGSTROMS) OF 5-248 OF COMPLEX WITH THE 20S PROTEASOME AND BORTEZOMIB</scope>
</reference>
<reference key="13">
    <citation type="journal article" date="2010" name="Mol. Cell">
        <title>Structure of a Blm10 complex reveals common mechanisms for proteasome binding and gate opening.</title>
        <authorList>
            <person name="Sadre-Bazzaz K."/>
            <person name="Whitby F.G."/>
            <person name="Robinson H."/>
            <person name="Formosa T."/>
            <person name="Hill C.P."/>
        </authorList>
    </citation>
    <scope>X-RAY CRYSTALLOGRAPHY (3.0 ANGSTROMS) OF 5-248 IN COMPLEX WITH THE PROTEASOME</scope>
</reference>
<reference key="14">
    <citation type="journal article" date="2012" name="Proc. Natl. Acad. Sci. U.S.A.">
        <title>Near-atomic resolution structural model of the yeast 26S proteasome.</title>
        <authorList>
            <person name="Beck F."/>
            <person name="Unverdorben P."/>
            <person name="Bohn S."/>
            <person name="Schweitzer A."/>
            <person name="Pfeifer G."/>
            <person name="Sakata E."/>
            <person name="Nickell S."/>
            <person name="Plitzko J.M."/>
            <person name="Villa E."/>
            <person name="Baumeister W."/>
            <person name="Forster F."/>
        </authorList>
    </citation>
    <scope>STRUCTURE BY ELECTRON MICROSCOPY (7.4 ANGSTROMS) OF THE 26S PROTEASOME</scope>
</reference>
<comment type="function">
    <text>The proteasome degrades poly-ubiquitinated proteins in the cytoplasm and in the nucleus. It is essential for the regulated turnover of proteins and for the removal of misfolded proteins. The proteasome is a multicatalytic proteinase complex that is characterized by its ability to cleave peptides with Arg, Phe, Tyr, Leu, and Glu adjacent to the leaving group at neutral or slightly basic pH. It has an ATP-dependent proteolytic activity.</text>
</comment>
<comment type="subunit">
    <text evidence="5">The 26S proteasome consists of a 20S proteasome core and two 19S regulatory subunits. The 20S proteasome core is composed of 28 subunits that are arranged in four stacked rings, resulting in a barrel-shaped structure. The two end rings are each formed by seven alpha subunits, and the two central rings are each formed by seven beta subunits. The catalytic chamber with the active sites is on the inside of the barrel.</text>
</comment>
<comment type="interaction">
    <interactant intactId="EBI-13963">
        <id>P21242</id>
    </interactant>
    <interactant intactId="EBI-13988">
        <id>P22141</id>
        <label>PRE1</label>
    </interactant>
    <organismsDiffer>false</organismsDiffer>
    <experiments>6</experiments>
</comment>
<comment type="interaction">
    <interactant intactId="EBI-13963">
        <id>P21242</id>
    </interactant>
    <interactant intactId="EBI-14001">
        <id>P30656</id>
        <label>PRE2</label>
    </interactant>
    <organismsDiffer>false</organismsDiffer>
    <experiments>4</experiments>
</comment>
<comment type="interaction">
    <interactant intactId="EBI-13963">
        <id>P21242</id>
    </interactant>
    <interactant intactId="EBI-13955">
        <id>P40302</id>
        <label>PRE5</label>
    </interactant>
    <organismsDiffer>false</organismsDiffer>
    <experiments>3</experiments>
</comment>
<comment type="interaction">
    <interactant intactId="EBI-13963">
        <id>P21242</id>
    </interactant>
    <interactant intactId="EBI-13959">
        <id>P23639</id>
        <label>PRE8</label>
    </interactant>
    <organismsDiffer>false</organismsDiffer>
    <experiments>3</experiments>
</comment>
<comment type="interaction">
    <interactant intactId="EBI-13963">
        <id>P21242</id>
    </interactant>
    <interactant intactId="EBI-13967">
        <id>P23638</id>
        <label>PRE9</label>
    </interactant>
    <organismsDiffer>false</organismsDiffer>
    <experiments>3</experiments>
</comment>
<comment type="interaction">
    <interactant intactId="EBI-13963">
        <id>P21242</id>
    </interactant>
    <interactant intactId="EBI-13971">
        <id>P32379</id>
        <label>PUP2</label>
    </interactant>
    <organismsDiffer>false</organismsDiffer>
    <experiments>3</experiments>
</comment>
<comment type="interaction">
    <interactant intactId="EBI-13963">
        <id>P21242</id>
    </interactant>
    <interactant intactId="EBI-11219">
        <id>P43588</id>
        <label>RPN11</label>
    </interactant>
    <organismsDiffer>false</organismsDiffer>
    <experiments>2</experiments>
</comment>
<comment type="interaction">
    <interactant intactId="EBI-13963">
        <id>P21242</id>
    </interactant>
    <interactant intactId="EBI-13975">
        <id>P21243</id>
        <label>SCL1</label>
    </interactant>
    <organismsDiffer>false</organismsDiffer>
    <experiments>11</experiments>
</comment>
<comment type="subcellular location">
    <subcellularLocation>
        <location>Cytoplasm</location>
    </subcellularLocation>
    <subcellularLocation>
        <location>Nucleus</location>
    </subcellularLocation>
</comment>
<comment type="PTM">
    <text>The alpha and beta forms are probably products of the same gene with different post-translational modifications.</text>
</comment>
<comment type="miscellaneous">
    <text evidence="3">Present with 12000 molecules/cell in log phase SD medium.</text>
</comment>
<comment type="similarity">
    <text evidence="1">Belongs to the peptidase T1A family.</text>
</comment>
<proteinExistence type="evidence at protein level"/>
<sequence length="288" mass="31536">MTSIGTGYDLSNSVFSPDGRNFQVEYAVKAVENGTTSIGIKCNDGVVFAVEKLITSKLLVPQKNVKIQVVDRHIGCVYSGLIPDGRHLVNRGREEAASFKKLYKTPIPIPAFADRLGQYVQAHTLYNSVRPFGVSTIFGGVDKNGAHLYMLEPSGSYWGYKGAATGKGRQSAKAELEKLVDHHPEGLSAREAVKQAAKIIYLAHEDNKEKDFELEISWCSLSETNGLHKFVKGDLLQEAIDFAQKEINGDDDEDEDDSDNVMSSDDENAPVATNANATTDQEGDIHLE</sequence>
<protein>
    <recommendedName>
        <fullName>Probable proteasome subunit alpha type-7</fullName>
    </recommendedName>
    <alternativeName>
        <fullName>Macropain subunit C1</fullName>
    </alternativeName>
    <alternativeName>
        <fullName>Multicatalytic endopeptidase complex subunit C1</fullName>
    </alternativeName>
    <alternativeName>
        <fullName>Proteasome component C1</fullName>
    </alternativeName>
    <alternativeName>
        <fullName>Proteinase YSCE subunit 1</fullName>
    </alternativeName>
</protein>
<evidence type="ECO:0000255" key="1">
    <source>
        <dbReference type="PROSITE-ProRule" id="PRU00808"/>
    </source>
</evidence>
<evidence type="ECO:0000256" key="2">
    <source>
        <dbReference type="SAM" id="MobiDB-lite"/>
    </source>
</evidence>
<evidence type="ECO:0000269" key="3">
    <source>
    </source>
</evidence>
<evidence type="ECO:0000269" key="4">
    <source>
    </source>
</evidence>
<evidence type="ECO:0000269" key="5">
    <source>
    </source>
</evidence>
<evidence type="ECO:0007744" key="6">
    <source>
    </source>
</evidence>
<evidence type="ECO:0007829" key="7">
    <source>
        <dbReference type="PDB" id="1JD2"/>
    </source>
</evidence>
<evidence type="ECO:0007829" key="8">
    <source>
        <dbReference type="PDB" id="1RYP"/>
    </source>
</evidence>
<evidence type="ECO:0007829" key="9">
    <source>
        <dbReference type="PDB" id="4LTC"/>
    </source>
</evidence>
<evidence type="ECO:0007829" key="10">
    <source>
        <dbReference type="PDB" id="4QLV"/>
    </source>
</evidence>
<evidence type="ECO:0007829" key="11">
    <source>
        <dbReference type="PDB" id="7LS5"/>
    </source>
</evidence>
<evidence type="ECO:0007829" key="12">
    <source>
        <dbReference type="PDB" id="8RVL"/>
    </source>
</evidence>
<evidence type="ECO:0007829" key="13">
    <source>
        <dbReference type="PDB" id="8RVQ"/>
    </source>
</evidence>
<organism>
    <name type="scientific">Saccharomyces cerevisiae (strain ATCC 204508 / S288c)</name>
    <name type="common">Baker's yeast</name>
    <dbReference type="NCBI Taxonomy" id="559292"/>
    <lineage>
        <taxon>Eukaryota</taxon>
        <taxon>Fungi</taxon>
        <taxon>Dikarya</taxon>
        <taxon>Ascomycota</taxon>
        <taxon>Saccharomycotina</taxon>
        <taxon>Saccharomycetes</taxon>
        <taxon>Saccharomycetales</taxon>
        <taxon>Saccharomycetaceae</taxon>
        <taxon>Saccharomyces</taxon>
    </lineage>
</organism>
<feature type="initiator methionine" description="Removed" evidence="4 6">
    <location>
        <position position="1"/>
    </location>
</feature>
<feature type="chain" id="PRO_0000124102" description="Probable proteasome subunit alpha type-7">
    <location>
        <begin position="2"/>
        <end position="288"/>
    </location>
</feature>
<feature type="region of interest" description="Disordered" evidence="2">
    <location>
        <begin position="247"/>
        <end position="288"/>
    </location>
</feature>
<feature type="compositionally biased region" description="Acidic residues" evidence="2">
    <location>
        <begin position="249"/>
        <end position="268"/>
    </location>
</feature>
<feature type="compositionally biased region" description="Low complexity" evidence="2">
    <location>
        <begin position="269"/>
        <end position="279"/>
    </location>
</feature>
<feature type="modified residue" description="N-acetylthreonine" evidence="6">
    <location>
        <position position="2"/>
    </location>
</feature>
<feature type="helix" evidence="13">
    <location>
        <begin position="7"/>
        <end position="9"/>
    </location>
</feature>
<feature type="strand" evidence="9">
    <location>
        <begin position="10"/>
        <end position="13"/>
    </location>
</feature>
<feature type="strand" evidence="10">
    <location>
        <begin position="17"/>
        <end position="19"/>
    </location>
</feature>
<feature type="helix" evidence="8">
    <location>
        <begin position="22"/>
        <end position="32"/>
    </location>
</feature>
<feature type="strand" evidence="8">
    <location>
        <begin position="37"/>
        <end position="42"/>
    </location>
</feature>
<feature type="strand" evidence="8">
    <location>
        <begin position="45"/>
        <end position="53"/>
    </location>
</feature>
<feature type="turn" evidence="8">
    <location>
        <begin position="61"/>
        <end position="63"/>
    </location>
</feature>
<feature type="strand" evidence="8">
    <location>
        <begin position="68"/>
        <end position="70"/>
    </location>
</feature>
<feature type="turn" evidence="8">
    <location>
        <begin position="71"/>
        <end position="73"/>
    </location>
</feature>
<feature type="strand" evidence="8">
    <location>
        <begin position="74"/>
        <end position="80"/>
    </location>
</feature>
<feature type="helix" evidence="8">
    <location>
        <begin position="82"/>
        <end position="103"/>
    </location>
</feature>
<feature type="helix" evidence="8">
    <location>
        <begin position="109"/>
        <end position="122"/>
    </location>
</feature>
<feature type="turn" evidence="11">
    <location>
        <begin position="123"/>
        <end position="125"/>
    </location>
</feature>
<feature type="strand" evidence="13">
    <location>
        <begin position="127"/>
        <end position="129"/>
    </location>
</feature>
<feature type="strand" evidence="8">
    <location>
        <begin position="134"/>
        <end position="142"/>
    </location>
</feature>
<feature type="strand" evidence="8">
    <location>
        <begin position="145"/>
        <end position="151"/>
    </location>
</feature>
<feature type="turn" evidence="7">
    <location>
        <begin position="153"/>
        <end position="155"/>
    </location>
</feature>
<feature type="strand" evidence="8">
    <location>
        <begin position="157"/>
        <end position="166"/>
    </location>
</feature>
<feature type="helix" evidence="8">
    <location>
        <begin position="169"/>
        <end position="182"/>
    </location>
</feature>
<feature type="helix" evidence="8">
    <location>
        <begin position="189"/>
        <end position="203"/>
    </location>
</feature>
<feature type="helix" evidence="8">
    <location>
        <begin position="204"/>
        <end position="207"/>
    </location>
</feature>
<feature type="strand" evidence="8">
    <location>
        <begin position="212"/>
        <end position="220"/>
    </location>
</feature>
<feature type="turn" evidence="8">
    <location>
        <begin position="221"/>
        <end position="223"/>
    </location>
</feature>
<feature type="strand" evidence="12">
    <location>
        <begin position="224"/>
        <end position="226"/>
    </location>
</feature>
<feature type="strand" evidence="8">
    <location>
        <begin position="227"/>
        <end position="230"/>
    </location>
</feature>
<feature type="helix" evidence="8">
    <location>
        <begin position="234"/>
        <end position="245"/>
    </location>
</feature>
<gene>
    <name type="primary">PRE10</name>
    <name type="synonym">PRC1</name>
    <name type="synonym">PRS1</name>
    <name type="ordered locus">YOR362C</name>
    <name type="ORF">O6650</name>
</gene>
<dbReference type="EMBL" id="M55436">
    <property type="protein sequence ID" value="AAA35227.1"/>
    <property type="molecule type" value="mRNA"/>
</dbReference>
<dbReference type="EMBL" id="Z75270">
    <property type="protein sequence ID" value="CAA99691.1"/>
    <property type="molecule type" value="Genomic_DNA"/>
</dbReference>
<dbReference type="EMBL" id="BK006948">
    <property type="protein sequence ID" value="DAA11123.1"/>
    <property type="molecule type" value="Genomic_DNA"/>
</dbReference>
<dbReference type="PIR" id="S11182">
    <property type="entry name" value="SNBYC1"/>
</dbReference>
<dbReference type="RefSeq" id="NP_015007.1">
    <property type="nucleotide sequence ID" value="NM_001183782.1"/>
</dbReference>
<dbReference type="PDB" id="1FNT">
    <property type="method" value="X-ray"/>
    <property type="resolution" value="3.20 A"/>
    <property type="chains" value="G/U=2-288"/>
</dbReference>
<dbReference type="PDB" id="1G0U">
    <property type="method" value="X-ray"/>
    <property type="resolution" value="2.40 A"/>
    <property type="chains" value="F/T=1-248"/>
</dbReference>
<dbReference type="PDB" id="1G65">
    <property type="method" value="X-ray"/>
    <property type="resolution" value="2.25 A"/>
    <property type="chains" value="F/T=5-248"/>
</dbReference>
<dbReference type="PDB" id="1JD2">
    <property type="method" value="X-ray"/>
    <property type="resolution" value="3.00 A"/>
    <property type="chains" value="1/F=5-248"/>
</dbReference>
<dbReference type="PDB" id="1RYP">
    <property type="method" value="X-ray"/>
    <property type="resolution" value="1.90 A"/>
    <property type="chains" value="G/U=5-248"/>
</dbReference>
<dbReference type="PDB" id="1Z7Q">
    <property type="method" value="X-ray"/>
    <property type="resolution" value="3.22 A"/>
    <property type="chains" value="G/U=1-288"/>
</dbReference>
<dbReference type="PDB" id="2F16">
    <property type="method" value="X-ray"/>
    <property type="resolution" value="2.80 A"/>
    <property type="chains" value="F/T=5-248"/>
</dbReference>
<dbReference type="PDB" id="2FAK">
    <property type="method" value="X-ray"/>
    <property type="resolution" value="2.80 A"/>
    <property type="chains" value="F/T=5-248"/>
</dbReference>
<dbReference type="PDB" id="2GPL">
    <property type="method" value="X-ray"/>
    <property type="resolution" value="2.81 A"/>
    <property type="chains" value="F/T=5-248"/>
</dbReference>
<dbReference type="PDB" id="2ZCY">
    <property type="method" value="X-ray"/>
    <property type="resolution" value="2.90 A"/>
    <property type="chains" value="F/T=2-288"/>
</dbReference>
<dbReference type="PDB" id="3BDM">
    <property type="method" value="X-ray"/>
    <property type="resolution" value="2.70 A"/>
    <property type="chains" value="F/T=2-288"/>
</dbReference>
<dbReference type="PDB" id="3D29">
    <property type="method" value="X-ray"/>
    <property type="resolution" value="2.60 A"/>
    <property type="chains" value="F/T=5-248"/>
</dbReference>
<dbReference type="PDB" id="3DY3">
    <property type="method" value="X-ray"/>
    <property type="resolution" value="2.81 A"/>
    <property type="chains" value="F/T=5-248"/>
</dbReference>
<dbReference type="PDB" id="3DY4">
    <property type="method" value="X-ray"/>
    <property type="resolution" value="2.80 A"/>
    <property type="chains" value="F/T=5-248"/>
</dbReference>
<dbReference type="PDB" id="3E47">
    <property type="method" value="X-ray"/>
    <property type="resolution" value="3.00 A"/>
    <property type="chains" value="F/T=5-248"/>
</dbReference>
<dbReference type="PDB" id="3GPJ">
    <property type="method" value="X-ray"/>
    <property type="resolution" value="2.70 A"/>
    <property type="chains" value="F/T=5-248"/>
</dbReference>
<dbReference type="PDB" id="3GPT">
    <property type="method" value="X-ray"/>
    <property type="resolution" value="2.41 A"/>
    <property type="chains" value="F/T=5-248"/>
</dbReference>
<dbReference type="PDB" id="3GPW">
    <property type="method" value="X-ray"/>
    <property type="resolution" value="2.50 A"/>
    <property type="chains" value="F/T=5-248"/>
</dbReference>
<dbReference type="PDB" id="3HYE">
    <property type="method" value="X-ray"/>
    <property type="resolution" value="2.50 A"/>
    <property type="chains" value="F/T=5-248"/>
</dbReference>
<dbReference type="PDB" id="3JCO">
    <property type="method" value="EM"/>
    <property type="resolution" value="4.80 A"/>
    <property type="chains" value="G/g=1-288"/>
</dbReference>
<dbReference type="PDB" id="3JCP">
    <property type="method" value="EM"/>
    <property type="resolution" value="4.60 A"/>
    <property type="chains" value="G/g=1-288"/>
</dbReference>
<dbReference type="PDB" id="3MG0">
    <property type="method" value="X-ray"/>
    <property type="resolution" value="2.68 A"/>
    <property type="chains" value="F/T=5-248"/>
</dbReference>
<dbReference type="PDB" id="3MG4">
    <property type="method" value="X-ray"/>
    <property type="resolution" value="3.11 A"/>
    <property type="chains" value="F/T=5-248"/>
</dbReference>
<dbReference type="PDB" id="3MG6">
    <property type="method" value="X-ray"/>
    <property type="resolution" value="2.60 A"/>
    <property type="chains" value="F/T=1-248"/>
</dbReference>
<dbReference type="PDB" id="3MG7">
    <property type="method" value="X-ray"/>
    <property type="resolution" value="2.78 A"/>
    <property type="chains" value="F/T=1-248"/>
</dbReference>
<dbReference type="PDB" id="3MG8">
    <property type="method" value="X-ray"/>
    <property type="resolution" value="2.59 A"/>
    <property type="chains" value="F/T=1-248"/>
</dbReference>
<dbReference type="PDB" id="3NZJ">
    <property type="method" value="X-ray"/>
    <property type="resolution" value="2.40 A"/>
    <property type="chains" value="F/T=1-288"/>
</dbReference>
<dbReference type="PDB" id="3NZW">
    <property type="method" value="X-ray"/>
    <property type="resolution" value="2.50 A"/>
    <property type="chains" value="F/T=1-288"/>
</dbReference>
<dbReference type="PDB" id="3NZX">
    <property type="method" value="X-ray"/>
    <property type="resolution" value="2.70 A"/>
    <property type="chains" value="F/T=1-288"/>
</dbReference>
<dbReference type="PDB" id="3OEU">
    <property type="method" value="X-ray"/>
    <property type="resolution" value="2.60 A"/>
    <property type="chains" value="F/T=7-248"/>
</dbReference>
<dbReference type="PDB" id="3OEV">
    <property type="method" value="X-ray"/>
    <property type="resolution" value="2.85 A"/>
    <property type="chains" value="F/T=7-248"/>
</dbReference>
<dbReference type="PDB" id="3OKJ">
    <property type="method" value="X-ray"/>
    <property type="resolution" value="2.70 A"/>
    <property type="chains" value="F/T=5-248"/>
</dbReference>
<dbReference type="PDB" id="3SDI">
    <property type="method" value="X-ray"/>
    <property type="resolution" value="2.65 A"/>
    <property type="chains" value="F/T=7-248"/>
</dbReference>
<dbReference type="PDB" id="3SDK">
    <property type="method" value="X-ray"/>
    <property type="resolution" value="2.70 A"/>
    <property type="chains" value="F/T=7-248"/>
</dbReference>
<dbReference type="PDB" id="3SHJ">
    <property type="method" value="X-ray"/>
    <property type="resolution" value="2.80 A"/>
    <property type="chains" value="F/T=5-248"/>
</dbReference>
<dbReference type="PDB" id="3TDD">
    <property type="method" value="X-ray"/>
    <property type="resolution" value="2.70 A"/>
    <property type="chains" value="F/T=5-248"/>
</dbReference>
<dbReference type="PDB" id="3UN4">
    <property type="method" value="X-ray"/>
    <property type="resolution" value="3.40 A"/>
    <property type="chains" value="F/T=1-288"/>
</dbReference>
<dbReference type="PDB" id="3UN8">
    <property type="method" value="X-ray"/>
    <property type="resolution" value="2.70 A"/>
    <property type="chains" value="F/T=1-288"/>
</dbReference>
<dbReference type="PDB" id="3WXR">
    <property type="method" value="X-ray"/>
    <property type="resolution" value="3.15 A"/>
    <property type="chains" value="G/U=13-288"/>
</dbReference>
<dbReference type="PDB" id="4CR2">
    <property type="method" value="EM"/>
    <property type="resolution" value="7.70 A"/>
    <property type="chains" value="G=1-288"/>
</dbReference>
<dbReference type="PDB" id="4CR3">
    <property type="method" value="EM"/>
    <property type="resolution" value="9.30 A"/>
    <property type="chains" value="G=1-288"/>
</dbReference>
<dbReference type="PDB" id="4CR4">
    <property type="method" value="EM"/>
    <property type="resolution" value="8.80 A"/>
    <property type="chains" value="G=1-288"/>
</dbReference>
<dbReference type="PDB" id="4EU2">
    <property type="method" value="X-ray"/>
    <property type="resolution" value="2.51 A"/>
    <property type="chains" value="G/U=5-248"/>
</dbReference>
<dbReference type="PDB" id="4FZC">
    <property type="method" value="X-ray"/>
    <property type="resolution" value="2.80 A"/>
    <property type="chains" value="F/T=5-248"/>
</dbReference>
<dbReference type="PDB" id="4FZG">
    <property type="method" value="X-ray"/>
    <property type="resolution" value="3.00 A"/>
    <property type="chains" value="F/T=5-248"/>
</dbReference>
<dbReference type="PDB" id="4G4S">
    <property type="method" value="X-ray"/>
    <property type="resolution" value="2.49 A"/>
    <property type="chains" value="G=1-288"/>
</dbReference>
<dbReference type="PDB" id="4GK7">
    <property type="method" value="X-ray"/>
    <property type="resolution" value="2.80 A"/>
    <property type="chains" value="F/T=5-248"/>
</dbReference>
<dbReference type="PDB" id="4HNP">
    <property type="method" value="X-ray"/>
    <property type="resolution" value="2.80 A"/>
    <property type="chains" value="F/T=5-248"/>
</dbReference>
<dbReference type="PDB" id="4HRC">
    <property type="method" value="X-ray"/>
    <property type="resolution" value="2.80 A"/>
    <property type="chains" value="F/T=5-248"/>
</dbReference>
<dbReference type="PDB" id="4HRD">
    <property type="method" value="X-ray"/>
    <property type="resolution" value="2.80 A"/>
    <property type="chains" value="F/T=5-248"/>
</dbReference>
<dbReference type="PDB" id="4INR">
    <property type="method" value="X-ray"/>
    <property type="resolution" value="2.70 A"/>
    <property type="chains" value="F/T=1-288"/>
</dbReference>
<dbReference type="PDB" id="4INT">
    <property type="method" value="X-ray"/>
    <property type="resolution" value="2.90 A"/>
    <property type="chains" value="F/T=1-288"/>
</dbReference>
<dbReference type="PDB" id="4INU">
    <property type="method" value="X-ray"/>
    <property type="resolution" value="3.10 A"/>
    <property type="chains" value="F/T=1-288"/>
</dbReference>
<dbReference type="PDB" id="4J70">
    <property type="method" value="X-ray"/>
    <property type="resolution" value="2.80 A"/>
    <property type="chains" value="F/T=1-288"/>
</dbReference>
<dbReference type="PDB" id="4JSQ">
    <property type="method" value="X-ray"/>
    <property type="resolution" value="2.80 A"/>
    <property type="chains" value="F/T=1-288"/>
</dbReference>
<dbReference type="PDB" id="4JSU">
    <property type="method" value="X-ray"/>
    <property type="resolution" value="2.90 A"/>
    <property type="chains" value="F/T=1-288"/>
</dbReference>
<dbReference type="PDB" id="4JT0">
    <property type="method" value="X-ray"/>
    <property type="resolution" value="3.10 A"/>
    <property type="chains" value="F/T=1-288"/>
</dbReference>
<dbReference type="PDB" id="4LQI">
    <property type="method" value="X-ray"/>
    <property type="resolution" value="2.70 A"/>
    <property type="chains" value="F/T=5-248"/>
</dbReference>
<dbReference type="PDB" id="4LTC">
    <property type="method" value="X-ray"/>
    <property type="resolution" value="2.50 A"/>
    <property type="chains" value="F/T=2-288"/>
</dbReference>
<dbReference type="PDB" id="4NNN">
    <property type="method" value="X-ray"/>
    <property type="resolution" value="2.50 A"/>
    <property type="chains" value="F/T=1-288"/>
</dbReference>
<dbReference type="PDB" id="4NNW">
    <property type="method" value="X-ray"/>
    <property type="resolution" value="2.60 A"/>
    <property type="chains" value="F/T=1-288"/>
</dbReference>
<dbReference type="PDB" id="4NO1">
    <property type="method" value="X-ray"/>
    <property type="resolution" value="2.50 A"/>
    <property type="chains" value="F/T=1-288"/>
</dbReference>
<dbReference type="PDB" id="4NO6">
    <property type="method" value="X-ray"/>
    <property type="resolution" value="3.00 A"/>
    <property type="chains" value="F/T=1-288"/>
</dbReference>
<dbReference type="PDB" id="4NO8">
    <property type="method" value="X-ray"/>
    <property type="resolution" value="2.70 A"/>
    <property type="chains" value="F/T=1-288"/>
</dbReference>
<dbReference type="PDB" id="4NO9">
    <property type="method" value="X-ray"/>
    <property type="resolution" value="2.90 A"/>
    <property type="chains" value="F/T=1-288"/>
</dbReference>
<dbReference type="PDB" id="4Q1S">
    <property type="method" value="X-ray"/>
    <property type="resolution" value="2.60 A"/>
    <property type="chains" value="F/T=1-288"/>
</dbReference>
<dbReference type="PDB" id="4QBY">
    <property type="method" value="X-ray"/>
    <property type="resolution" value="3.00 A"/>
    <property type="chains" value="F/T=1-288"/>
</dbReference>
<dbReference type="PDB" id="4QLQ">
    <property type="method" value="X-ray"/>
    <property type="resolution" value="2.40 A"/>
    <property type="chains" value="F/T=1-288"/>
</dbReference>
<dbReference type="PDB" id="4QLS">
    <property type="method" value="X-ray"/>
    <property type="resolution" value="2.80 A"/>
    <property type="chains" value="F/T=1-288"/>
</dbReference>
<dbReference type="PDB" id="4QLT">
    <property type="method" value="X-ray"/>
    <property type="resolution" value="2.80 A"/>
    <property type="chains" value="F/T=1-288"/>
</dbReference>
<dbReference type="PDB" id="4QLU">
    <property type="method" value="X-ray"/>
    <property type="resolution" value="2.80 A"/>
    <property type="chains" value="F/T=1-288"/>
</dbReference>
<dbReference type="PDB" id="4QLV">
    <property type="method" value="X-ray"/>
    <property type="resolution" value="2.90 A"/>
    <property type="chains" value="F/T=1-288"/>
</dbReference>
<dbReference type="PDB" id="4QUX">
    <property type="method" value="X-ray"/>
    <property type="resolution" value="3.00 A"/>
    <property type="chains" value="F/T=1-288"/>
</dbReference>
<dbReference type="PDB" id="4QUY">
    <property type="method" value="X-ray"/>
    <property type="resolution" value="2.80 A"/>
    <property type="chains" value="F/T=1-288"/>
</dbReference>
<dbReference type="PDB" id="4QV0">
    <property type="method" value="X-ray"/>
    <property type="resolution" value="3.10 A"/>
    <property type="chains" value="F/T=1-288"/>
</dbReference>
<dbReference type="PDB" id="4QV1">
    <property type="method" value="X-ray"/>
    <property type="resolution" value="2.50 A"/>
    <property type="chains" value="F/T=1-288"/>
</dbReference>
<dbReference type="PDB" id="4QV3">
    <property type="method" value="X-ray"/>
    <property type="resolution" value="3.00 A"/>
    <property type="chains" value="F/T=1-288"/>
</dbReference>
<dbReference type="PDB" id="4QV4">
    <property type="method" value="X-ray"/>
    <property type="resolution" value="2.70 A"/>
    <property type="chains" value="F/T=1-288"/>
</dbReference>
<dbReference type="PDB" id="4QV5">
    <property type="method" value="X-ray"/>
    <property type="resolution" value="2.70 A"/>
    <property type="chains" value="F/T=1-288"/>
</dbReference>
<dbReference type="PDB" id="4QV6">
    <property type="method" value="X-ray"/>
    <property type="resolution" value="2.80 A"/>
    <property type="chains" value="F/T=1-288"/>
</dbReference>
<dbReference type="PDB" id="4QV7">
    <property type="method" value="X-ray"/>
    <property type="resolution" value="2.60 A"/>
    <property type="chains" value="F/T=1-288"/>
</dbReference>
<dbReference type="PDB" id="4QV8">
    <property type="method" value="X-ray"/>
    <property type="resolution" value="2.90 A"/>
    <property type="chains" value="F/T=1-288"/>
</dbReference>
<dbReference type="PDB" id="4QV9">
    <property type="method" value="X-ray"/>
    <property type="resolution" value="2.60 A"/>
    <property type="chains" value="F/T=1-288"/>
</dbReference>
<dbReference type="PDB" id="4QVL">
    <property type="method" value="X-ray"/>
    <property type="resolution" value="2.80 A"/>
    <property type="chains" value="F/T=1-288"/>
</dbReference>
<dbReference type="PDB" id="4QVM">
    <property type="method" value="X-ray"/>
    <property type="resolution" value="2.80 A"/>
    <property type="chains" value="F/T=1-288"/>
</dbReference>
<dbReference type="PDB" id="4QVN">
    <property type="method" value="X-ray"/>
    <property type="resolution" value="2.90 A"/>
    <property type="chains" value="F/T=1-288"/>
</dbReference>
<dbReference type="PDB" id="4QVP">
    <property type="method" value="X-ray"/>
    <property type="resolution" value="2.30 A"/>
    <property type="chains" value="F/T=1-288"/>
</dbReference>
<dbReference type="PDB" id="4QVQ">
    <property type="method" value="X-ray"/>
    <property type="resolution" value="2.60 A"/>
    <property type="chains" value="F/T=1-288"/>
</dbReference>
<dbReference type="PDB" id="4QVV">
    <property type="method" value="X-ray"/>
    <property type="resolution" value="2.80 A"/>
    <property type="chains" value="F/T=1-288"/>
</dbReference>
<dbReference type="PDB" id="4QVW">
    <property type="method" value="X-ray"/>
    <property type="resolution" value="3.00 A"/>
    <property type="chains" value="F/T=1-288"/>
</dbReference>
<dbReference type="PDB" id="4QVY">
    <property type="method" value="X-ray"/>
    <property type="resolution" value="2.51 A"/>
    <property type="chains" value="F/T=1-288"/>
</dbReference>
<dbReference type="PDB" id="4QW0">
    <property type="method" value="X-ray"/>
    <property type="resolution" value="2.90 A"/>
    <property type="chains" value="F/T=1-288"/>
</dbReference>
<dbReference type="PDB" id="4QW1">
    <property type="method" value="X-ray"/>
    <property type="resolution" value="2.90 A"/>
    <property type="chains" value="F/T=1-288"/>
</dbReference>
<dbReference type="PDB" id="4QW3">
    <property type="method" value="X-ray"/>
    <property type="resolution" value="2.90 A"/>
    <property type="chains" value="F/T=1-288"/>
</dbReference>
<dbReference type="PDB" id="4QW4">
    <property type="method" value="X-ray"/>
    <property type="resolution" value="2.80 A"/>
    <property type="chains" value="F/T=1-288"/>
</dbReference>
<dbReference type="PDB" id="4QW5">
    <property type="method" value="X-ray"/>
    <property type="resolution" value="3.00 A"/>
    <property type="chains" value="F/T=1-288"/>
</dbReference>
<dbReference type="PDB" id="4QW6">
    <property type="method" value="X-ray"/>
    <property type="resolution" value="2.90 A"/>
    <property type="chains" value="F/T=1-288"/>
</dbReference>
<dbReference type="PDB" id="4QW7">
    <property type="method" value="X-ray"/>
    <property type="resolution" value="2.70 A"/>
    <property type="chains" value="F/T=1-288"/>
</dbReference>
<dbReference type="PDB" id="4QWF">
    <property type="method" value="X-ray"/>
    <property type="resolution" value="3.00 A"/>
    <property type="chains" value="F/T=1-288"/>
</dbReference>
<dbReference type="PDB" id="4QWG">
    <property type="method" value="X-ray"/>
    <property type="resolution" value="2.60 A"/>
    <property type="chains" value="F/T=1-288"/>
</dbReference>
<dbReference type="PDB" id="4QWI">
    <property type="method" value="X-ray"/>
    <property type="resolution" value="2.60 A"/>
    <property type="chains" value="F/T=1-288"/>
</dbReference>
<dbReference type="PDB" id="4QWJ">
    <property type="method" value="X-ray"/>
    <property type="resolution" value="2.90 A"/>
    <property type="chains" value="F/T=1-288"/>
</dbReference>
<dbReference type="PDB" id="4QWK">
    <property type="method" value="X-ray"/>
    <property type="resolution" value="2.80 A"/>
    <property type="chains" value="F/T=1-288"/>
</dbReference>
<dbReference type="PDB" id="4QWL">
    <property type="method" value="X-ray"/>
    <property type="resolution" value="2.60 A"/>
    <property type="chains" value="F/T=1-288"/>
</dbReference>
<dbReference type="PDB" id="4QWR">
    <property type="method" value="X-ray"/>
    <property type="resolution" value="2.90 A"/>
    <property type="chains" value="F/T=1-288"/>
</dbReference>
<dbReference type="PDB" id="4QWS">
    <property type="method" value="X-ray"/>
    <property type="resolution" value="3.00 A"/>
    <property type="chains" value="F/T=1-288"/>
</dbReference>
<dbReference type="PDB" id="4QWU">
    <property type="method" value="X-ray"/>
    <property type="resolution" value="3.00 A"/>
    <property type="chains" value="F/T=1-288"/>
</dbReference>
<dbReference type="PDB" id="4QWX">
    <property type="method" value="X-ray"/>
    <property type="resolution" value="2.90 A"/>
    <property type="chains" value="F/T=1-288"/>
</dbReference>
<dbReference type="PDB" id="4QXJ">
    <property type="method" value="X-ray"/>
    <property type="resolution" value="2.80 A"/>
    <property type="chains" value="F/T=1-288"/>
</dbReference>
<dbReference type="PDB" id="4QZ0">
    <property type="method" value="X-ray"/>
    <property type="resolution" value="3.00 A"/>
    <property type="chains" value="F/T=1-288"/>
</dbReference>
<dbReference type="PDB" id="4QZ1">
    <property type="method" value="X-ray"/>
    <property type="resolution" value="3.00 A"/>
    <property type="chains" value="F/T=1-288"/>
</dbReference>
<dbReference type="PDB" id="4QZ2">
    <property type="method" value="X-ray"/>
    <property type="resolution" value="2.70 A"/>
    <property type="chains" value="F/T=1-288"/>
</dbReference>
<dbReference type="PDB" id="4QZ3">
    <property type="method" value="X-ray"/>
    <property type="resolution" value="2.80 A"/>
    <property type="chains" value="F/T=1-288"/>
</dbReference>
<dbReference type="PDB" id="4QZ4">
    <property type="method" value="X-ray"/>
    <property type="resolution" value="3.00 A"/>
    <property type="chains" value="F/T=1-288"/>
</dbReference>
<dbReference type="PDB" id="4QZ5">
    <property type="method" value="X-ray"/>
    <property type="resolution" value="2.80 A"/>
    <property type="chains" value="F/T=1-288"/>
</dbReference>
<dbReference type="PDB" id="4QZ6">
    <property type="method" value="X-ray"/>
    <property type="resolution" value="2.90 A"/>
    <property type="chains" value="F/T=1-288"/>
</dbReference>
<dbReference type="PDB" id="4QZ7">
    <property type="method" value="X-ray"/>
    <property type="resolution" value="2.80 A"/>
    <property type="chains" value="F/T=1-288"/>
</dbReference>
<dbReference type="PDB" id="4QZW">
    <property type="method" value="X-ray"/>
    <property type="resolution" value="3.00 A"/>
    <property type="chains" value="F/T=1-288"/>
</dbReference>
<dbReference type="PDB" id="4QZX">
    <property type="method" value="X-ray"/>
    <property type="resolution" value="2.60 A"/>
    <property type="chains" value="F/T=1-288"/>
</dbReference>
<dbReference type="PDB" id="4QZZ">
    <property type="method" value="X-ray"/>
    <property type="resolution" value="2.90 A"/>
    <property type="chains" value="F/T=1-288"/>
</dbReference>
<dbReference type="PDB" id="4R00">
    <property type="method" value="X-ray"/>
    <property type="resolution" value="2.80 A"/>
    <property type="chains" value="F/T=1-288"/>
</dbReference>
<dbReference type="PDB" id="4R02">
    <property type="method" value="X-ray"/>
    <property type="resolution" value="2.50 A"/>
    <property type="chains" value="F/T=1-288"/>
</dbReference>
<dbReference type="PDB" id="4R17">
    <property type="method" value="X-ray"/>
    <property type="resolution" value="2.10 A"/>
    <property type="chains" value="F/T=1-288"/>
</dbReference>
<dbReference type="PDB" id="4R18">
    <property type="method" value="X-ray"/>
    <property type="resolution" value="2.40 A"/>
    <property type="chains" value="F/T=1-288"/>
</dbReference>
<dbReference type="PDB" id="4RUR">
    <property type="method" value="X-ray"/>
    <property type="resolution" value="2.50 A"/>
    <property type="chains" value="F/T=1-288"/>
</dbReference>
<dbReference type="PDB" id="4V7O">
    <property type="method" value="X-ray"/>
    <property type="resolution" value="3.00 A"/>
    <property type="chains" value="AL/AX/BG/BU=5-248"/>
</dbReference>
<dbReference type="PDB" id="4X6Z">
    <property type="method" value="X-ray"/>
    <property type="resolution" value="2.70 A"/>
    <property type="chains" value="G/U=1-288"/>
</dbReference>
<dbReference type="PDB" id="4Y69">
    <property type="method" value="X-ray"/>
    <property type="resolution" value="2.90 A"/>
    <property type="chains" value="F/T=1-288"/>
</dbReference>
<dbReference type="PDB" id="4Y6A">
    <property type="method" value="X-ray"/>
    <property type="resolution" value="2.60 A"/>
    <property type="chains" value="F/T=1-288"/>
</dbReference>
<dbReference type="PDB" id="4Y6V">
    <property type="method" value="X-ray"/>
    <property type="resolution" value="2.80 A"/>
    <property type="chains" value="F/T=1-288"/>
</dbReference>
<dbReference type="PDB" id="4Y6Z">
    <property type="method" value="X-ray"/>
    <property type="resolution" value="2.70 A"/>
    <property type="chains" value="F/T=1-288"/>
</dbReference>
<dbReference type="PDB" id="4Y70">
    <property type="method" value="X-ray"/>
    <property type="resolution" value="2.40 A"/>
    <property type="chains" value="F/T=1-288"/>
</dbReference>
<dbReference type="PDB" id="4Y74">
    <property type="method" value="X-ray"/>
    <property type="resolution" value="2.70 A"/>
    <property type="chains" value="F/T=1-288"/>
</dbReference>
<dbReference type="PDB" id="4Y75">
    <property type="method" value="X-ray"/>
    <property type="resolution" value="2.80 A"/>
    <property type="chains" value="F/T=1-288"/>
</dbReference>
<dbReference type="PDB" id="4Y77">
    <property type="method" value="X-ray"/>
    <property type="resolution" value="2.50 A"/>
    <property type="chains" value="F/T=1-288"/>
</dbReference>
<dbReference type="PDB" id="4Y78">
    <property type="method" value="X-ray"/>
    <property type="resolution" value="2.80 A"/>
    <property type="chains" value="F/T=1-288"/>
</dbReference>
<dbReference type="PDB" id="4Y7W">
    <property type="method" value="X-ray"/>
    <property type="resolution" value="2.50 A"/>
    <property type="chains" value="F/T=1-288"/>
</dbReference>
<dbReference type="PDB" id="4Y7X">
    <property type="method" value="X-ray"/>
    <property type="resolution" value="2.60 A"/>
    <property type="chains" value="F/T=1-288"/>
</dbReference>
<dbReference type="PDB" id="4Y7Y">
    <property type="method" value="X-ray"/>
    <property type="resolution" value="2.40 A"/>
    <property type="chains" value="F/T=1-288"/>
</dbReference>
<dbReference type="PDB" id="4Y80">
    <property type="method" value="X-ray"/>
    <property type="resolution" value="2.50 A"/>
    <property type="chains" value="F/T=1-288"/>
</dbReference>
<dbReference type="PDB" id="4Y81">
    <property type="method" value="X-ray"/>
    <property type="resolution" value="2.80 A"/>
    <property type="chains" value="F/T=1-288"/>
</dbReference>
<dbReference type="PDB" id="4Y82">
    <property type="method" value="X-ray"/>
    <property type="resolution" value="2.80 A"/>
    <property type="chains" value="F/T=1-288"/>
</dbReference>
<dbReference type="PDB" id="4Y84">
    <property type="method" value="X-ray"/>
    <property type="resolution" value="2.70 A"/>
    <property type="chains" value="F/T=1-288"/>
</dbReference>
<dbReference type="PDB" id="4Y8G">
    <property type="method" value="X-ray"/>
    <property type="resolution" value="2.60 A"/>
    <property type="chains" value="F/T=1-288"/>
</dbReference>
<dbReference type="PDB" id="4Y8H">
    <property type="method" value="X-ray"/>
    <property type="resolution" value="2.50 A"/>
    <property type="chains" value="F/T=1-288"/>
</dbReference>
<dbReference type="PDB" id="4Y8I">
    <property type="method" value="X-ray"/>
    <property type="resolution" value="2.60 A"/>
    <property type="chains" value="F/T=1-288"/>
</dbReference>
<dbReference type="PDB" id="4Y8J">
    <property type="method" value="X-ray"/>
    <property type="resolution" value="2.70 A"/>
    <property type="chains" value="F/T=1-288"/>
</dbReference>
<dbReference type="PDB" id="4Y8K">
    <property type="method" value="X-ray"/>
    <property type="resolution" value="2.60 A"/>
    <property type="chains" value="F/T=1-288"/>
</dbReference>
<dbReference type="PDB" id="4Y8L">
    <property type="method" value="X-ray"/>
    <property type="resolution" value="2.40 A"/>
    <property type="chains" value="F/T=1-288"/>
</dbReference>
<dbReference type="PDB" id="4Y8M">
    <property type="method" value="X-ray"/>
    <property type="resolution" value="2.80 A"/>
    <property type="chains" value="F/T=1-288"/>
</dbReference>
<dbReference type="PDB" id="4Y8N">
    <property type="method" value="X-ray"/>
    <property type="resolution" value="2.60 A"/>
    <property type="chains" value="F/T=1-288"/>
</dbReference>
<dbReference type="PDB" id="4Y8O">
    <property type="method" value="X-ray"/>
    <property type="resolution" value="2.70 A"/>
    <property type="chains" value="F/T=1-288"/>
</dbReference>
<dbReference type="PDB" id="4Y8P">
    <property type="method" value="X-ray"/>
    <property type="resolution" value="2.80 A"/>
    <property type="chains" value="F/T=1-288"/>
</dbReference>
<dbReference type="PDB" id="4Y8Q">
    <property type="method" value="X-ray"/>
    <property type="resolution" value="2.60 A"/>
    <property type="chains" value="F/T=1-288"/>
</dbReference>
<dbReference type="PDB" id="4Y8R">
    <property type="method" value="X-ray"/>
    <property type="resolution" value="2.70 A"/>
    <property type="chains" value="F/T=1-288"/>
</dbReference>
<dbReference type="PDB" id="4Y8S">
    <property type="method" value="X-ray"/>
    <property type="resolution" value="2.70 A"/>
    <property type="chains" value="F/T=1-288"/>
</dbReference>
<dbReference type="PDB" id="4Y8T">
    <property type="method" value="X-ray"/>
    <property type="resolution" value="2.70 A"/>
    <property type="chains" value="F/T=1-288"/>
</dbReference>
<dbReference type="PDB" id="4Y8U">
    <property type="method" value="X-ray"/>
    <property type="resolution" value="2.90 A"/>
    <property type="chains" value="F/T=1-288"/>
</dbReference>
<dbReference type="PDB" id="4Y9Y">
    <property type="method" value="X-ray"/>
    <property type="resolution" value="2.80 A"/>
    <property type="chains" value="F/T=1-288"/>
</dbReference>
<dbReference type="PDB" id="4Y9Z">
    <property type="method" value="X-ray"/>
    <property type="resolution" value="2.80 A"/>
    <property type="chains" value="F/T=1-288"/>
</dbReference>
<dbReference type="PDB" id="4YA0">
    <property type="method" value="X-ray"/>
    <property type="resolution" value="2.80 A"/>
    <property type="chains" value="F/T=1-288"/>
</dbReference>
<dbReference type="PDB" id="4YA1">
    <property type="method" value="X-ray"/>
    <property type="resolution" value="2.90 A"/>
    <property type="chains" value="F/T=1-288"/>
</dbReference>
<dbReference type="PDB" id="4YA2">
    <property type="method" value="X-ray"/>
    <property type="resolution" value="2.70 A"/>
    <property type="chains" value="F/T=1-288"/>
</dbReference>
<dbReference type="PDB" id="4YA3">
    <property type="method" value="X-ray"/>
    <property type="resolution" value="2.70 A"/>
    <property type="chains" value="F/T=1-288"/>
</dbReference>
<dbReference type="PDB" id="4YA4">
    <property type="method" value="X-ray"/>
    <property type="resolution" value="2.90 A"/>
    <property type="chains" value="F/T=1-288"/>
</dbReference>
<dbReference type="PDB" id="4YA5">
    <property type="method" value="X-ray"/>
    <property type="resolution" value="2.50 A"/>
    <property type="chains" value="F/T=1-288"/>
</dbReference>
<dbReference type="PDB" id="4YA7">
    <property type="method" value="X-ray"/>
    <property type="resolution" value="2.70 A"/>
    <property type="chains" value="F/T=1-288"/>
</dbReference>
<dbReference type="PDB" id="4YA9">
    <property type="method" value="X-ray"/>
    <property type="resolution" value="2.70 A"/>
    <property type="chains" value="F/T=1-288"/>
</dbReference>
<dbReference type="PDB" id="4Z1L">
    <property type="method" value="X-ray"/>
    <property type="resolution" value="3.00 A"/>
    <property type="chains" value="F/T=1-288"/>
</dbReference>
<dbReference type="PDB" id="5A5B">
    <property type="method" value="EM"/>
    <property type="resolution" value="9.50 A"/>
    <property type="chains" value="G=1-288"/>
</dbReference>
<dbReference type="PDB" id="5AHJ">
    <property type="method" value="X-ray"/>
    <property type="resolution" value="2.80 A"/>
    <property type="chains" value="F/T=1-288"/>
</dbReference>
<dbReference type="PDB" id="5BOU">
    <property type="method" value="X-ray"/>
    <property type="resolution" value="2.60 A"/>
    <property type="chains" value="F/T=1-288"/>
</dbReference>
<dbReference type="PDB" id="5BXL">
    <property type="method" value="X-ray"/>
    <property type="resolution" value="2.80 A"/>
    <property type="chains" value="F/T=1-288"/>
</dbReference>
<dbReference type="PDB" id="5BXN">
    <property type="method" value="X-ray"/>
    <property type="resolution" value="2.80 A"/>
    <property type="chains" value="F/T=1-288"/>
</dbReference>
<dbReference type="PDB" id="5CGF">
    <property type="method" value="X-ray"/>
    <property type="resolution" value="2.80 A"/>
    <property type="chains" value="F/T=1-288"/>
</dbReference>
<dbReference type="PDB" id="5CGG">
    <property type="method" value="X-ray"/>
    <property type="resolution" value="2.90 A"/>
    <property type="chains" value="F/T=1-288"/>
</dbReference>
<dbReference type="PDB" id="5CGH">
    <property type="method" value="X-ray"/>
    <property type="resolution" value="2.50 A"/>
    <property type="chains" value="F/T=1-288"/>
</dbReference>
<dbReference type="PDB" id="5CGI">
    <property type="method" value="X-ray"/>
    <property type="resolution" value="2.80 A"/>
    <property type="chains" value="F/T=1-288"/>
</dbReference>
<dbReference type="PDB" id="5CZ4">
    <property type="method" value="X-ray"/>
    <property type="resolution" value="2.30 A"/>
    <property type="chains" value="F/T=1-288"/>
</dbReference>
<dbReference type="PDB" id="5CZ5">
    <property type="method" value="X-ray"/>
    <property type="resolution" value="2.80 A"/>
    <property type="chains" value="F/T=1-288"/>
</dbReference>
<dbReference type="PDB" id="5CZ6">
    <property type="method" value="X-ray"/>
    <property type="resolution" value="2.70 A"/>
    <property type="chains" value="F/T=1-288"/>
</dbReference>
<dbReference type="PDB" id="5CZ7">
    <property type="method" value="X-ray"/>
    <property type="resolution" value="2.50 A"/>
    <property type="chains" value="F/T=1-288"/>
</dbReference>
<dbReference type="PDB" id="5CZ8">
    <property type="method" value="X-ray"/>
    <property type="resolution" value="2.80 A"/>
    <property type="chains" value="F/T=1-288"/>
</dbReference>
<dbReference type="PDB" id="5CZ9">
    <property type="method" value="X-ray"/>
    <property type="resolution" value="2.90 A"/>
    <property type="chains" value="F/T=1-288"/>
</dbReference>
<dbReference type="PDB" id="5CZA">
    <property type="method" value="X-ray"/>
    <property type="resolution" value="2.50 A"/>
    <property type="chains" value="F/T=1-288"/>
</dbReference>
<dbReference type="PDB" id="5D0S">
    <property type="method" value="X-ray"/>
    <property type="resolution" value="2.50 A"/>
    <property type="chains" value="F/T=1-288"/>
</dbReference>
<dbReference type="PDB" id="5D0T">
    <property type="method" value="X-ray"/>
    <property type="resolution" value="2.60 A"/>
    <property type="chains" value="F/T=1-288"/>
</dbReference>
<dbReference type="PDB" id="5D0V">
    <property type="method" value="X-ray"/>
    <property type="resolution" value="2.90 A"/>
    <property type="chains" value="F/T=1-288"/>
</dbReference>
<dbReference type="PDB" id="5D0W">
    <property type="method" value="X-ray"/>
    <property type="resolution" value="2.80 A"/>
    <property type="chains" value="F/T=1-288"/>
</dbReference>
<dbReference type="PDB" id="5D0X">
    <property type="method" value="X-ray"/>
    <property type="resolution" value="2.60 A"/>
    <property type="chains" value="F/T=1-288"/>
</dbReference>
<dbReference type="PDB" id="5D0Z">
    <property type="method" value="X-ray"/>
    <property type="resolution" value="2.90 A"/>
    <property type="chains" value="F/T=1-288"/>
</dbReference>
<dbReference type="PDB" id="5DKI">
    <property type="method" value="X-ray"/>
    <property type="resolution" value="2.80 A"/>
    <property type="chains" value="F/T=1-288"/>
</dbReference>
<dbReference type="PDB" id="5DKJ">
    <property type="method" value="X-ray"/>
    <property type="resolution" value="2.80 A"/>
    <property type="chains" value="F/T=1-288"/>
</dbReference>
<dbReference type="PDB" id="5FG7">
    <property type="method" value="X-ray"/>
    <property type="resolution" value="2.70 A"/>
    <property type="chains" value="F/T=1-288"/>
</dbReference>
<dbReference type="PDB" id="5FG9">
    <property type="method" value="X-ray"/>
    <property type="resolution" value="2.60 A"/>
    <property type="chains" value="F/T=1-288"/>
</dbReference>
<dbReference type="PDB" id="5FGA">
    <property type="method" value="X-ray"/>
    <property type="resolution" value="2.70 A"/>
    <property type="chains" value="F/T=1-288"/>
</dbReference>
<dbReference type="PDB" id="5FGD">
    <property type="method" value="X-ray"/>
    <property type="resolution" value="2.80 A"/>
    <property type="chains" value="F/T=1-288"/>
</dbReference>
<dbReference type="PDB" id="5FGE">
    <property type="method" value="X-ray"/>
    <property type="resolution" value="2.60 A"/>
    <property type="chains" value="F/T=1-288"/>
</dbReference>
<dbReference type="PDB" id="5FGF">
    <property type="method" value="X-ray"/>
    <property type="resolution" value="2.60 A"/>
    <property type="chains" value="F/T=1-288"/>
</dbReference>
<dbReference type="PDB" id="5FGG">
    <property type="method" value="X-ray"/>
    <property type="resolution" value="2.70 A"/>
    <property type="chains" value="F/T=1-288"/>
</dbReference>
<dbReference type="PDB" id="5FGH">
    <property type="method" value="X-ray"/>
    <property type="resolution" value="2.80 A"/>
    <property type="chains" value="F/T=1-288"/>
</dbReference>
<dbReference type="PDB" id="5FGI">
    <property type="method" value="X-ray"/>
    <property type="resolution" value="2.90 A"/>
    <property type="chains" value="F/T=1-288"/>
</dbReference>
<dbReference type="PDB" id="5FHS">
    <property type="method" value="X-ray"/>
    <property type="resolution" value="2.70 A"/>
    <property type="chains" value="F/T=1-288"/>
</dbReference>
<dbReference type="PDB" id="5JHR">
    <property type="method" value="X-ray"/>
    <property type="resolution" value="2.90 A"/>
    <property type="chains" value="F/T=1-288"/>
</dbReference>
<dbReference type="PDB" id="5JHS">
    <property type="method" value="X-ray"/>
    <property type="resolution" value="3.00 A"/>
    <property type="chains" value="F/T=1-288"/>
</dbReference>
<dbReference type="PDB" id="5L52">
    <property type="method" value="X-ray"/>
    <property type="resolution" value="2.70 A"/>
    <property type="chains" value="F/T=1-288"/>
</dbReference>
<dbReference type="PDB" id="5L54">
    <property type="method" value="X-ray"/>
    <property type="resolution" value="2.80 A"/>
    <property type="chains" value="F/T=1-288"/>
</dbReference>
<dbReference type="PDB" id="5L55">
    <property type="method" value="X-ray"/>
    <property type="resolution" value="2.90 A"/>
    <property type="chains" value="F/T=1-288"/>
</dbReference>
<dbReference type="PDB" id="5L5A">
    <property type="method" value="X-ray"/>
    <property type="resolution" value="2.40 A"/>
    <property type="chains" value="F/T=1-288"/>
</dbReference>
<dbReference type="PDB" id="5L5B">
    <property type="method" value="X-ray"/>
    <property type="resolution" value="2.80 A"/>
    <property type="chains" value="F/T=1-288"/>
</dbReference>
<dbReference type="PDB" id="5L5D">
    <property type="method" value="X-ray"/>
    <property type="resolution" value="2.80 A"/>
    <property type="chains" value="F/T=1-288"/>
</dbReference>
<dbReference type="PDB" id="5L5E">
    <property type="method" value="X-ray"/>
    <property type="resolution" value="2.90 A"/>
    <property type="chains" value="F/T=1-288"/>
</dbReference>
<dbReference type="PDB" id="5L5F">
    <property type="method" value="X-ray"/>
    <property type="resolution" value="2.50 A"/>
    <property type="chains" value="F/T=1-288"/>
</dbReference>
<dbReference type="PDB" id="5L5H">
    <property type="method" value="X-ray"/>
    <property type="resolution" value="2.60 A"/>
    <property type="chains" value="F/T=1-288"/>
</dbReference>
<dbReference type="PDB" id="5L5I">
    <property type="method" value="X-ray"/>
    <property type="resolution" value="2.90 A"/>
    <property type="chains" value="F/T=1-288"/>
</dbReference>
<dbReference type="PDB" id="5L5J">
    <property type="method" value="X-ray"/>
    <property type="resolution" value="2.90 A"/>
    <property type="chains" value="F/T=1-288"/>
</dbReference>
<dbReference type="PDB" id="5L5O">
    <property type="method" value="X-ray"/>
    <property type="resolution" value="2.60 A"/>
    <property type="chains" value="F/T=1-288"/>
</dbReference>
<dbReference type="PDB" id="5L5P">
    <property type="method" value="X-ray"/>
    <property type="resolution" value="2.80 A"/>
    <property type="chains" value="F/T=1-288"/>
</dbReference>
<dbReference type="PDB" id="5L5Q">
    <property type="method" value="X-ray"/>
    <property type="resolution" value="2.80 A"/>
    <property type="chains" value="F/T=1-288"/>
</dbReference>
<dbReference type="PDB" id="5L5R">
    <property type="method" value="X-ray"/>
    <property type="resolution" value="2.90 A"/>
    <property type="chains" value="F/T=1-288"/>
</dbReference>
<dbReference type="PDB" id="5L5S">
    <property type="method" value="X-ray"/>
    <property type="resolution" value="2.60 A"/>
    <property type="chains" value="F/T=1-288"/>
</dbReference>
<dbReference type="PDB" id="5L5T">
    <property type="method" value="X-ray"/>
    <property type="resolution" value="2.90 A"/>
    <property type="chains" value="F/T=1-288"/>
</dbReference>
<dbReference type="PDB" id="5L5U">
    <property type="method" value="X-ray"/>
    <property type="resolution" value="2.60 A"/>
    <property type="chains" value="F/T=1-288"/>
</dbReference>
<dbReference type="PDB" id="5L5V">
    <property type="method" value="X-ray"/>
    <property type="resolution" value="2.70 A"/>
    <property type="chains" value="F/T=1-288"/>
</dbReference>
<dbReference type="PDB" id="5L5W">
    <property type="method" value="X-ray"/>
    <property type="resolution" value="2.80 A"/>
    <property type="chains" value="F/T=1-288"/>
</dbReference>
<dbReference type="PDB" id="5L5X">
    <property type="method" value="X-ray"/>
    <property type="resolution" value="2.90 A"/>
    <property type="chains" value="F/T=1-288"/>
</dbReference>
<dbReference type="PDB" id="5L5Y">
    <property type="method" value="X-ray"/>
    <property type="resolution" value="2.70 A"/>
    <property type="chains" value="F/T=1-288"/>
</dbReference>
<dbReference type="PDB" id="5L5Z">
    <property type="method" value="X-ray"/>
    <property type="resolution" value="2.70 A"/>
    <property type="chains" value="F/T=1-288"/>
</dbReference>
<dbReference type="PDB" id="5L60">
    <property type="method" value="X-ray"/>
    <property type="resolution" value="2.70 A"/>
    <property type="chains" value="F/T=1-288"/>
</dbReference>
<dbReference type="PDB" id="5L61">
    <property type="method" value="X-ray"/>
    <property type="resolution" value="2.80 A"/>
    <property type="chains" value="F/T=1-288"/>
</dbReference>
<dbReference type="PDB" id="5L62">
    <property type="method" value="X-ray"/>
    <property type="resolution" value="2.80 A"/>
    <property type="chains" value="F/T=1-288"/>
</dbReference>
<dbReference type="PDB" id="5L63">
    <property type="method" value="X-ray"/>
    <property type="resolution" value="2.70 A"/>
    <property type="chains" value="F/T=1-288"/>
</dbReference>
<dbReference type="PDB" id="5L64">
    <property type="method" value="X-ray"/>
    <property type="resolution" value="2.70 A"/>
    <property type="chains" value="F/T=1-288"/>
</dbReference>
<dbReference type="PDB" id="5L65">
    <property type="method" value="X-ray"/>
    <property type="resolution" value="2.90 A"/>
    <property type="chains" value="F/T=1-288"/>
</dbReference>
<dbReference type="PDB" id="5L66">
    <property type="method" value="X-ray"/>
    <property type="resolution" value="2.80 A"/>
    <property type="chains" value="F/T=1-288"/>
</dbReference>
<dbReference type="PDB" id="5L67">
    <property type="method" value="X-ray"/>
    <property type="resolution" value="2.60 A"/>
    <property type="chains" value="F/T=1-288"/>
</dbReference>
<dbReference type="PDB" id="5L68">
    <property type="method" value="X-ray"/>
    <property type="resolution" value="2.80 A"/>
    <property type="chains" value="F/T=1-288"/>
</dbReference>
<dbReference type="PDB" id="5L69">
    <property type="method" value="X-ray"/>
    <property type="resolution" value="2.70 A"/>
    <property type="chains" value="F/T=1-288"/>
</dbReference>
<dbReference type="PDB" id="5L6A">
    <property type="method" value="X-ray"/>
    <property type="resolution" value="2.80 A"/>
    <property type="chains" value="F/T=1-288"/>
</dbReference>
<dbReference type="PDB" id="5L6B">
    <property type="method" value="X-ray"/>
    <property type="resolution" value="2.60 A"/>
    <property type="chains" value="F/T=1-288"/>
</dbReference>
<dbReference type="PDB" id="5L6C">
    <property type="method" value="X-ray"/>
    <property type="resolution" value="2.60 A"/>
    <property type="chains" value="F/T=1-288"/>
</dbReference>
<dbReference type="PDB" id="5LAI">
    <property type="method" value="X-ray"/>
    <property type="resolution" value="2.50 A"/>
    <property type="chains" value="F/T=1-288"/>
</dbReference>
<dbReference type="PDB" id="5LAJ">
    <property type="method" value="X-ray"/>
    <property type="resolution" value="2.90 A"/>
    <property type="chains" value="F/T=1-288"/>
</dbReference>
<dbReference type="PDB" id="5LTT">
    <property type="method" value="X-ray"/>
    <property type="resolution" value="2.70 A"/>
    <property type="chains" value="F/T=1-288"/>
</dbReference>
<dbReference type="PDB" id="5M2B">
    <property type="method" value="X-ray"/>
    <property type="resolution" value="2.70 A"/>
    <property type="chains" value="F/T=1-288"/>
</dbReference>
<dbReference type="PDB" id="5MP9">
    <property type="method" value="EM"/>
    <property type="resolution" value="4.10 A"/>
    <property type="chains" value="G/g=1-288"/>
</dbReference>
<dbReference type="PDB" id="5MPA">
    <property type="method" value="EM"/>
    <property type="resolution" value="4.50 A"/>
    <property type="chains" value="G/g=1-288"/>
</dbReference>
<dbReference type="PDB" id="5MPB">
    <property type="method" value="EM"/>
    <property type="resolution" value="7.80 A"/>
    <property type="chains" value="G/g=1-288"/>
</dbReference>
<dbReference type="PDB" id="5MPC">
    <property type="method" value="EM"/>
    <property type="resolution" value="7.70 A"/>
    <property type="chains" value="G/g=1-288"/>
</dbReference>
<dbReference type="PDB" id="5NIF">
    <property type="method" value="X-ray"/>
    <property type="resolution" value="3.00 A"/>
    <property type="chains" value="G/U=1-288"/>
</dbReference>
<dbReference type="PDB" id="5WVI">
    <property type="method" value="EM"/>
    <property type="resolution" value="6.30 A"/>
    <property type="chains" value="G/k=1-288"/>
</dbReference>
<dbReference type="PDB" id="5WVK">
    <property type="method" value="EM"/>
    <property type="resolution" value="4.20 A"/>
    <property type="chains" value="G/k=1-288"/>
</dbReference>
<dbReference type="PDB" id="6EF0">
    <property type="method" value="EM"/>
    <property type="resolution" value="4.43 A"/>
    <property type="chains" value="G=3-248"/>
</dbReference>
<dbReference type="PDB" id="6EF1">
    <property type="method" value="EM"/>
    <property type="resolution" value="4.73 A"/>
    <property type="chains" value="G=6-248"/>
</dbReference>
<dbReference type="PDB" id="6EF2">
    <property type="method" value="EM"/>
    <property type="resolution" value="4.27 A"/>
    <property type="chains" value="G=3-248"/>
</dbReference>
<dbReference type="PDB" id="6EF3">
    <property type="method" value="EM"/>
    <property type="resolution" value="4.17 A"/>
    <property type="chains" value="G=1-288"/>
</dbReference>
<dbReference type="PDB" id="6FVT">
    <property type="method" value="EM"/>
    <property type="resolution" value="4.10 A"/>
    <property type="chains" value="G/g=4-248"/>
</dbReference>
<dbReference type="PDB" id="6FVU">
    <property type="method" value="EM"/>
    <property type="resolution" value="4.50 A"/>
    <property type="chains" value="G/g=7-248"/>
</dbReference>
<dbReference type="PDB" id="6FVV">
    <property type="method" value="EM"/>
    <property type="resolution" value="5.40 A"/>
    <property type="chains" value="G/g=7-248"/>
</dbReference>
<dbReference type="PDB" id="6FVW">
    <property type="method" value="EM"/>
    <property type="resolution" value="4.50 A"/>
    <property type="chains" value="G/g=4-248"/>
</dbReference>
<dbReference type="PDB" id="6FVX">
    <property type="method" value="EM"/>
    <property type="resolution" value="4.90 A"/>
    <property type="chains" value="G/g=5-248"/>
</dbReference>
<dbReference type="PDB" id="6FVY">
    <property type="method" value="EM"/>
    <property type="resolution" value="6.10 A"/>
    <property type="chains" value="G/g=4-248"/>
</dbReference>
<dbReference type="PDB" id="6G7F">
    <property type="method" value="X-ray"/>
    <property type="resolution" value="2.70 A"/>
    <property type="chains" value="F/T=1-288"/>
</dbReference>
<dbReference type="PDB" id="6G8M">
    <property type="method" value="X-ray"/>
    <property type="resolution" value="2.70 A"/>
    <property type="chains" value="F/T=1-288"/>
</dbReference>
<dbReference type="PDB" id="6G8N">
    <property type="method" value="X-ray"/>
    <property type="resolution" value="3.00 A"/>
    <property type="chains" value="F/T=1-288"/>
</dbReference>
<dbReference type="PDB" id="6GOP">
    <property type="method" value="X-ray"/>
    <property type="resolution" value="2.90 A"/>
    <property type="chains" value="F/T=1-288"/>
</dbReference>
<dbReference type="PDB" id="6H39">
    <property type="method" value="X-ray"/>
    <property type="resolution" value="2.50 A"/>
    <property type="chains" value="F/T=1-288"/>
</dbReference>
<dbReference type="PDB" id="6HTB">
    <property type="method" value="X-ray"/>
    <property type="resolution" value="2.70 A"/>
    <property type="chains" value="F/T=1-288"/>
</dbReference>
<dbReference type="PDB" id="6HTC">
    <property type="method" value="X-ray"/>
    <property type="resolution" value="2.80 A"/>
    <property type="chains" value="F/T=1-288"/>
</dbReference>
<dbReference type="PDB" id="6HTD">
    <property type="method" value="X-ray"/>
    <property type="resolution" value="3.00 A"/>
    <property type="chains" value="F/T=1-288"/>
</dbReference>
<dbReference type="PDB" id="6HTP">
    <property type="method" value="X-ray"/>
    <property type="resolution" value="3.00 A"/>
    <property type="chains" value="F/T=1-288"/>
</dbReference>
<dbReference type="PDB" id="6HTR">
    <property type="method" value="X-ray"/>
    <property type="resolution" value="2.60 A"/>
    <property type="chains" value="F/T=1-288"/>
</dbReference>
<dbReference type="PDB" id="6HUB">
    <property type="method" value="X-ray"/>
    <property type="resolution" value="2.90 A"/>
    <property type="chains" value="F/T=1-288"/>
</dbReference>
<dbReference type="PDB" id="6HUC">
    <property type="method" value="X-ray"/>
    <property type="resolution" value="3.00 A"/>
    <property type="chains" value="F/T=1-288"/>
</dbReference>
<dbReference type="PDB" id="6HUQ">
    <property type="method" value="X-ray"/>
    <property type="resolution" value="3.00 A"/>
    <property type="chains" value="F/T=1-288"/>
</dbReference>
<dbReference type="PDB" id="6HUU">
    <property type="method" value="X-ray"/>
    <property type="resolution" value="2.80 A"/>
    <property type="chains" value="F/T=1-288"/>
</dbReference>
<dbReference type="PDB" id="6HUV">
    <property type="method" value="X-ray"/>
    <property type="resolution" value="3.10 A"/>
    <property type="chains" value="F/T=1-288"/>
</dbReference>
<dbReference type="PDB" id="6HV3">
    <property type="method" value="X-ray"/>
    <property type="resolution" value="2.70 A"/>
    <property type="chains" value="F/T=1-288"/>
</dbReference>
<dbReference type="PDB" id="6HV4">
    <property type="method" value="X-ray"/>
    <property type="resolution" value="3.00 A"/>
    <property type="chains" value="F/T=1-288"/>
</dbReference>
<dbReference type="PDB" id="6HV5">
    <property type="method" value="X-ray"/>
    <property type="resolution" value="3.00 A"/>
    <property type="chains" value="F/T=1-288"/>
</dbReference>
<dbReference type="PDB" id="6HV7">
    <property type="method" value="X-ray"/>
    <property type="resolution" value="3.40 A"/>
    <property type="chains" value="F/T=1-288"/>
</dbReference>
<dbReference type="PDB" id="6HVA">
    <property type="method" value="X-ray"/>
    <property type="resolution" value="2.90 A"/>
    <property type="chains" value="F/T=1-288"/>
</dbReference>
<dbReference type="PDB" id="6HVR">
    <property type="method" value="X-ray"/>
    <property type="resolution" value="2.70 A"/>
    <property type="chains" value="F/T=1-288"/>
</dbReference>
<dbReference type="PDB" id="6HVS">
    <property type="method" value="X-ray"/>
    <property type="resolution" value="3.10 A"/>
    <property type="chains" value="F/T=1-288"/>
</dbReference>
<dbReference type="PDB" id="6HVT">
    <property type="method" value="X-ray"/>
    <property type="resolution" value="2.90 A"/>
    <property type="chains" value="F/T=1-288"/>
</dbReference>
<dbReference type="PDB" id="6HVU">
    <property type="method" value="X-ray"/>
    <property type="resolution" value="2.90 A"/>
    <property type="chains" value="F/T=1-288"/>
</dbReference>
<dbReference type="PDB" id="6HVV">
    <property type="method" value="X-ray"/>
    <property type="resolution" value="2.70 A"/>
    <property type="chains" value="F/T=1-288"/>
</dbReference>
<dbReference type="PDB" id="6HVW">
    <property type="method" value="X-ray"/>
    <property type="resolution" value="3.00 A"/>
    <property type="chains" value="F/T=1-288"/>
</dbReference>
<dbReference type="PDB" id="6HVX">
    <property type="method" value="X-ray"/>
    <property type="resolution" value="2.80 A"/>
    <property type="chains" value="F/T=1-288"/>
</dbReference>
<dbReference type="PDB" id="6HVY">
    <property type="method" value="X-ray"/>
    <property type="resolution" value="2.70 A"/>
    <property type="chains" value="F/T=1-288"/>
</dbReference>
<dbReference type="PDB" id="6HW0">
    <property type="method" value="X-ray"/>
    <property type="resolution" value="2.80 A"/>
    <property type="chains" value="F/T=1-288"/>
</dbReference>
<dbReference type="PDB" id="6HW3">
    <property type="method" value="X-ray"/>
    <property type="resolution" value="2.60 A"/>
    <property type="chains" value="F/T=1-288"/>
</dbReference>
<dbReference type="PDB" id="6HW4">
    <property type="method" value="X-ray"/>
    <property type="resolution" value="2.90 A"/>
    <property type="chains" value="F/T=1-288"/>
</dbReference>
<dbReference type="PDB" id="6HW5">
    <property type="method" value="X-ray"/>
    <property type="resolution" value="2.90 A"/>
    <property type="chains" value="F/T=1-288"/>
</dbReference>
<dbReference type="PDB" id="6HW6">
    <property type="method" value="X-ray"/>
    <property type="resolution" value="2.70 A"/>
    <property type="chains" value="F/T=1-288"/>
</dbReference>
<dbReference type="PDB" id="6HW7">
    <property type="method" value="X-ray"/>
    <property type="resolution" value="2.70 A"/>
    <property type="chains" value="F/T=1-288"/>
</dbReference>
<dbReference type="PDB" id="6HW8">
    <property type="method" value="X-ray"/>
    <property type="resolution" value="2.80 A"/>
    <property type="chains" value="F/T=1-288"/>
</dbReference>
<dbReference type="PDB" id="6HW9">
    <property type="method" value="X-ray"/>
    <property type="resolution" value="2.80 A"/>
    <property type="chains" value="F/T=1-288"/>
</dbReference>
<dbReference type="PDB" id="6HWA">
    <property type="method" value="X-ray"/>
    <property type="resolution" value="2.80 A"/>
    <property type="chains" value="F/T=1-288"/>
</dbReference>
<dbReference type="PDB" id="6HWB">
    <property type="method" value="X-ray"/>
    <property type="resolution" value="2.60 A"/>
    <property type="chains" value="F/T=1-288"/>
</dbReference>
<dbReference type="PDB" id="6HWC">
    <property type="method" value="X-ray"/>
    <property type="resolution" value="2.80 A"/>
    <property type="chains" value="F/T=1-288"/>
</dbReference>
<dbReference type="PDB" id="6HWD">
    <property type="method" value="X-ray"/>
    <property type="resolution" value="2.80 A"/>
    <property type="chains" value="F/T=1-288"/>
</dbReference>
<dbReference type="PDB" id="6HWE">
    <property type="method" value="X-ray"/>
    <property type="resolution" value="2.30 A"/>
    <property type="chains" value="F/T=1-288"/>
</dbReference>
<dbReference type="PDB" id="6HWF">
    <property type="method" value="X-ray"/>
    <property type="resolution" value="2.50 A"/>
    <property type="chains" value="F/T=1-288"/>
</dbReference>
<dbReference type="PDB" id="6J2C">
    <property type="method" value="EM"/>
    <property type="resolution" value="7.00 A"/>
    <property type="chains" value="G/k=1-288"/>
</dbReference>
<dbReference type="PDB" id="6J2N">
    <property type="method" value="EM"/>
    <property type="resolution" value="7.50 A"/>
    <property type="chains" value="G/k=1-288"/>
</dbReference>
<dbReference type="PDB" id="6J2Q">
    <property type="method" value="EM"/>
    <property type="resolution" value="3.80 A"/>
    <property type="chains" value="G/k=1-288"/>
</dbReference>
<dbReference type="PDB" id="6J2X">
    <property type="method" value="EM"/>
    <property type="resolution" value="3.80 A"/>
    <property type="chains" value="G/k=1-288"/>
</dbReference>
<dbReference type="PDB" id="6J30">
    <property type="method" value="EM"/>
    <property type="resolution" value="4.50 A"/>
    <property type="chains" value="G/k=1-288"/>
</dbReference>
<dbReference type="PDB" id="6ZOU">
    <property type="method" value="X-ray"/>
    <property type="resolution" value="2.90 A"/>
    <property type="chains" value="F/T=1-288"/>
</dbReference>
<dbReference type="PDB" id="6ZP6">
    <property type="method" value="X-ray"/>
    <property type="resolution" value="2.80 A"/>
    <property type="chains" value="F/T=1-288"/>
</dbReference>
<dbReference type="PDB" id="6ZP8">
    <property type="method" value="X-ray"/>
    <property type="resolution" value="3.00 A"/>
    <property type="chains" value="F/T=1-288"/>
</dbReference>
<dbReference type="PDB" id="7LS5">
    <property type="method" value="EM"/>
    <property type="resolution" value="2.74 A"/>
    <property type="chains" value="G/U=1-288"/>
</dbReference>
<dbReference type="PDB" id="7LS6">
    <property type="method" value="EM"/>
    <property type="resolution" value="3.17 A"/>
    <property type="chains" value="G=1-288"/>
</dbReference>
<dbReference type="PDB" id="7LSX">
    <property type="method" value="EM"/>
    <property type="resolution" value="3.61 A"/>
    <property type="chains" value="G=1-288"/>
</dbReference>
<dbReference type="PDB" id="7O2L">
    <property type="method" value="X-ray"/>
    <property type="resolution" value="3.00 A"/>
    <property type="chains" value="F/T=1-288"/>
</dbReference>
<dbReference type="PDB" id="7QO3">
    <property type="method" value="EM"/>
    <property type="resolution" value="6.10 A"/>
    <property type="chains" value="G/g=1-288"/>
</dbReference>
<dbReference type="PDB" id="7QO5">
    <property type="method" value="EM"/>
    <property type="resolution" value="6.00 A"/>
    <property type="chains" value="G/g=1-288"/>
</dbReference>
<dbReference type="PDB" id="7TEJ">
    <property type="method" value="EM"/>
    <property type="resolution" value="2.74 A"/>
    <property type="chains" value="G/U=1-288"/>
</dbReference>
<dbReference type="PDB" id="7TEO">
    <property type="method" value="EM"/>
    <property type="resolution" value="2.97 A"/>
    <property type="chains" value="G/U=1-288"/>
</dbReference>
<dbReference type="PDB" id="8BW1">
    <property type="method" value="X-ray"/>
    <property type="resolution" value="3.25 A"/>
    <property type="chains" value="F/T=1-288"/>
</dbReference>
<dbReference type="PDB" id="8OHZ">
    <property type="method" value="X-ray"/>
    <property type="resolution" value="2.65 A"/>
    <property type="chains" value="F/T=1-288"/>
</dbReference>
<dbReference type="PDB" id="8OI1">
    <property type="method" value="X-ray"/>
    <property type="resolution" value="2.95 A"/>
    <property type="chains" value="F/T=1-288"/>
</dbReference>
<dbReference type="PDB" id="8OLR">
    <property type="method" value="X-ray"/>
    <property type="resolution" value="2.80 A"/>
    <property type="chains" value="F/T=1-288"/>
</dbReference>
<dbReference type="PDB" id="8RHJ">
    <property type="method" value="X-ray"/>
    <property type="resolution" value="3.05 A"/>
    <property type="chains" value="F/T=1-288"/>
</dbReference>
<dbReference type="PDB" id="8RHK">
    <property type="method" value="X-ray"/>
    <property type="resolution" value="2.80 A"/>
    <property type="chains" value="F/T=1-288"/>
</dbReference>
<dbReference type="PDB" id="8RHL">
    <property type="method" value="X-ray"/>
    <property type="resolution" value="3.20 A"/>
    <property type="chains" value="F/T=1-288"/>
</dbReference>
<dbReference type="PDB" id="8RVL">
    <property type="method" value="EM"/>
    <property type="resolution" value="2.14 A"/>
    <property type="chains" value="G/U=1-288"/>
</dbReference>
<dbReference type="PDB" id="8RVO">
    <property type="method" value="EM"/>
    <property type="resolution" value="2.69 A"/>
    <property type="chains" value="G/U=1-288"/>
</dbReference>
<dbReference type="PDB" id="8RVP">
    <property type="method" value="EM"/>
    <property type="resolution" value="2.28 A"/>
    <property type="chains" value="G/U=1-288"/>
</dbReference>
<dbReference type="PDB" id="8RVQ">
    <property type="method" value="EM"/>
    <property type="resolution" value="2.02 A"/>
    <property type="chains" value="G/U=1-288"/>
</dbReference>
<dbReference type="PDB" id="8T08">
    <property type="method" value="EM"/>
    <property type="resolution" value="3.00 A"/>
    <property type="chains" value="G/X=1-288"/>
</dbReference>
<dbReference type="PDB" id="8T0M">
    <property type="method" value="EM"/>
    <property type="resolution" value="2.40 A"/>
    <property type="chains" value="G/U=1-288"/>
</dbReference>
<dbReference type="PDB" id="8U6Y">
    <property type="method" value="EM"/>
    <property type="resolution" value="2.80 A"/>
    <property type="chains" value="G/X=1-288"/>
</dbReference>
<dbReference type="PDB" id="8U7U">
    <property type="method" value="EM"/>
    <property type="resolution" value="2.16 A"/>
    <property type="chains" value="G/U=1-288"/>
</dbReference>
<dbReference type="PDB" id="9D0T">
    <property type="method" value="EM"/>
    <property type="resolution" value="2.84 A"/>
    <property type="chains" value="G=1-288"/>
</dbReference>
<dbReference type="PDB" id="9EY9">
    <property type="method" value="X-ray"/>
    <property type="resolution" value="3.10 A"/>
    <property type="chains" value="F/T=1-288"/>
</dbReference>
<dbReference type="PDB" id="9FST">
    <property type="method" value="X-ray"/>
    <property type="resolution" value="2.75 A"/>
    <property type="chains" value="F/T=1-288"/>
</dbReference>
<dbReference type="PDB" id="9FSV">
    <property type="method" value="X-ray"/>
    <property type="resolution" value="2.75 A"/>
    <property type="chains" value="F/T=1-288"/>
</dbReference>
<dbReference type="PDB" id="9FT0">
    <property type="method" value="X-ray"/>
    <property type="resolution" value="2.75 A"/>
    <property type="chains" value="F/T=1-288"/>
</dbReference>
<dbReference type="PDB" id="9FT1">
    <property type="method" value="X-ray"/>
    <property type="resolution" value="2.60 A"/>
    <property type="chains" value="F/T=1-288"/>
</dbReference>
<dbReference type="PDB" id="9GBK">
    <property type="method" value="EM"/>
    <property type="resolution" value="2.39 A"/>
    <property type="chains" value="G/U=1-288"/>
</dbReference>
<dbReference type="PDBsum" id="1FNT"/>
<dbReference type="PDBsum" id="1G0U"/>
<dbReference type="PDBsum" id="1G65"/>
<dbReference type="PDBsum" id="1JD2"/>
<dbReference type="PDBsum" id="1RYP"/>
<dbReference type="PDBsum" id="1Z7Q"/>
<dbReference type="PDBsum" id="2F16"/>
<dbReference type="PDBsum" id="2FAK"/>
<dbReference type="PDBsum" id="2GPL"/>
<dbReference type="PDBsum" id="2ZCY"/>
<dbReference type="PDBsum" id="3BDM"/>
<dbReference type="PDBsum" id="3D29"/>
<dbReference type="PDBsum" id="3DY3"/>
<dbReference type="PDBsum" id="3DY4"/>
<dbReference type="PDBsum" id="3E47"/>
<dbReference type="PDBsum" id="3GPJ"/>
<dbReference type="PDBsum" id="3GPT"/>
<dbReference type="PDBsum" id="3GPW"/>
<dbReference type="PDBsum" id="3HYE"/>
<dbReference type="PDBsum" id="3JCO"/>
<dbReference type="PDBsum" id="3JCP"/>
<dbReference type="PDBsum" id="3MG0"/>
<dbReference type="PDBsum" id="3MG4"/>
<dbReference type="PDBsum" id="3MG6"/>
<dbReference type="PDBsum" id="3MG7"/>
<dbReference type="PDBsum" id="3MG8"/>
<dbReference type="PDBsum" id="3NZJ"/>
<dbReference type="PDBsum" id="3NZW"/>
<dbReference type="PDBsum" id="3NZX"/>
<dbReference type="PDBsum" id="3OEU"/>
<dbReference type="PDBsum" id="3OEV"/>
<dbReference type="PDBsum" id="3OKJ"/>
<dbReference type="PDBsum" id="3SDI"/>
<dbReference type="PDBsum" id="3SDK"/>
<dbReference type="PDBsum" id="3SHJ"/>
<dbReference type="PDBsum" id="3TDD"/>
<dbReference type="PDBsum" id="3UN4"/>
<dbReference type="PDBsum" id="3UN8"/>
<dbReference type="PDBsum" id="3WXR"/>
<dbReference type="PDBsum" id="4CR2"/>
<dbReference type="PDBsum" id="4CR3"/>
<dbReference type="PDBsum" id="4CR4"/>
<dbReference type="PDBsum" id="4EU2"/>
<dbReference type="PDBsum" id="4FZC"/>
<dbReference type="PDBsum" id="4FZG"/>
<dbReference type="PDBsum" id="4G4S"/>
<dbReference type="PDBsum" id="4GK7"/>
<dbReference type="PDBsum" id="4HNP"/>
<dbReference type="PDBsum" id="4HRC"/>
<dbReference type="PDBsum" id="4HRD"/>
<dbReference type="PDBsum" id="4INR"/>
<dbReference type="PDBsum" id="4INT"/>
<dbReference type="PDBsum" id="4INU"/>
<dbReference type="PDBsum" id="4J70"/>
<dbReference type="PDBsum" id="4JSQ"/>
<dbReference type="PDBsum" id="4JSU"/>
<dbReference type="PDBsum" id="4JT0"/>
<dbReference type="PDBsum" id="4LQI"/>
<dbReference type="PDBsum" id="4LTC"/>
<dbReference type="PDBsum" id="4NNN"/>
<dbReference type="PDBsum" id="4NNW"/>
<dbReference type="PDBsum" id="4NO1"/>
<dbReference type="PDBsum" id="4NO6"/>
<dbReference type="PDBsum" id="4NO8"/>
<dbReference type="PDBsum" id="4NO9"/>
<dbReference type="PDBsum" id="4Q1S"/>
<dbReference type="PDBsum" id="4QBY"/>
<dbReference type="PDBsum" id="4QLQ"/>
<dbReference type="PDBsum" id="4QLS"/>
<dbReference type="PDBsum" id="4QLT"/>
<dbReference type="PDBsum" id="4QLU"/>
<dbReference type="PDBsum" id="4QLV"/>
<dbReference type="PDBsum" id="4QUX"/>
<dbReference type="PDBsum" id="4QUY"/>
<dbReference type="PDBsum" id="4QV0"/>
<dbReference type="PDBsum" id="4QV1"/>
<dbReference type="PDBsum" id="4QV3"/>
<dbReference type="PDBsum" id="4QV4"/>
<dbReference type="PDBsum" id="4QV5"/>
<dbReference type="PDBsum" id="4QV6"/>
<dbReference type="PDBsum" id="4QV7"/>
<dbReference type="PDBsum" id="4QV8"/>
<dbReference type="PDBsum" id="4QV9"/>
<dbReference type="PDBsum" id="4QVL"/>
<dbReference type="PDBsum" id="4QVM"/>
<dbReference type="PDBsum" id="4QVN"/>
<dbReference type="PDBsum" id="4QVP"/>
<dbReference type="PDBsum" id="4QVQ"/>
<dbReference type="PDBsum" id="4QVV"/>
<dbReference type="PDBsum" id="4QVW"/>
<dbReference type="PDBsum" id="4QVY"/>
<dbReference type="PDBsum" id="4QW0"/>
<dbReference type="PDBsum" id="4QW1"/>
<dbReference type="PDBsum" id="4QW3"/>
<dbReference type="PDBsum" id="4QW4"/>
<dbReference type="PDBsum" id="4QW5"/>
<dbReference type="PDBsum" id="4QW6"/>
<dbReference type="PDBsum" id="4QW7"/>
<dbReference type="PDBsum" id="4QWF"/>
<dbReference type="PDBsum" id="4QWG"/>
<dbReference type="PDBsum" id="4QWI"/>
<dbReference type="PDBsum" id="4QWJ"/>
<dbReference type="PDBsum" id="4QWK"/>
<dbReference type="PDBsum" id="4QWL"/>
<dbReference type="PDBsum" id="4QWR"/>
<dbReference type="PDBsum" id="4QWS"/>
<dbReference type="PDBsum" id="4QWU"/>
<dbReference type="PDBsum" id="4QWX"/>
<dbReference type="PDBsum" id="4QXJ"/>
<dbReference type="PDBsum" id="4QZ0"/>
<dbReference type="PDBsum" id="4QZ1"/>
<dbReference type="PDBsum" id="4QZ2"/>
<dbReference type="PDBsum" id="4QZ3"/>
<dbReference type="PDBsum" id="4QZ4"/>
<dbReference type="PDBsum" id="4QZ5"/>
<dbReference type="PDBsum" id="4QZ6"/>
<dbReference type="PDBsum" id="4QZ7"/>
<dbReference type="PDBsum" id="4QZW"/>
<dbReference type="PDBsum" id="4QZX"/>
<dbReference type="PDBsum" id="4QZZ"/>
<dbReference type="PDBsum" id="4R00"/>
<dbReference type="PDBsum" id="4R02"/>
<dbReference type="PDBsum" id="4R17"/>
<dbReference type="PDBsum" id="4R18"/>
<dbReference type="PDBsum" id="4RUR"/>
<dbReference type="PDBsum" id="4V7O"/>
<dbReference type="PDBsum" id="4X6Z"/>
<dbReference type="PDBsum" id="4Y69"/>
<dbReference type="PDBsum" id="4Y6A"/>
<dbReference type="PDBsum" id="4Y6V"/>
<dbReference type="PDBsum" id="4Y6Z"/>
<dbReference type="PDBsum" id="4Y70"/>
<dbReference type="PDBsum" id="4Y74"/>
<dbReference type="PDBsum" id="4Y75"/>
<dbReference type="PDBsum" id="4Y77"/>
<dbReference type="PDBsum" id="4Y78"/>
<dbReference type="PDBsum" id="4Y7W"/>
<dbReference type="PDBsum" id="4Y7X"/>
<dbReference type="PDBsum" id="4Y7Y"/>
<dbReference type="PDBsum" id="4Y80"/>
<dbReference type="PDBsum" id="4Y81"/>
<dbReference type="PDBsum" id="4Y82"/>
<dbReference type="PDBsum" id="4Y84"/>
<dbReference type="PDBsum" id="4Y8G"/>
<dbReference type="PDBsum" id="4Y8H"/>
<dbReference type="PDBsum" id="4Y8I"/>
<dbReference type="PDBsum" id="4Y8J"/>
<dbReference type="PDBsum" id="4Y8K"/>
<dbReference type="PDBsum" id="4Y8L"/>
<dbReference type="PDBsum" id="4Y8M"/>
<dbReference type="PDBsum" id="4Y8N"/>
<dbReference type="PDBsum" id="4Y8O"/>
<dbReference type="PDBsum" id="4Y8P"/>
<dbReference type="PDBsum" id="4Y8Q"/>
<dbReference type="PDBsum" id="4Y8R"/>
<dbReference type="PDBsum" id="4Y8S"/>
<dbReference type="PDBsum" id="4Y8T"/>
<dbReference type="PDBsum" id="4Y8U"/>
<dbReference type="PDBsum" id="4Y9Y"/>
<dbReference type="PDBsum" id="4Y9Z"/>
<dbReference type="PDBsum" id="4YA0"/>
<dbReference type="PDBsum" id="4YA1"/>
<dbReference type="PDBsum" id="4YA2"/>
<dbReference type="PDBsum" id="4YA3"/>
<dbReference type="PDBsum" id="4YA4"/>
<dbReference type="PDBsum" id="4YA5"/>
<dbReference type="PDBsum" id="4YA7"/>
<dbReference type="PDBsum" id="4YA9"/>
<dbReference type="PDBsum" id="4Z1L"/>
<dbReference type="PDBsum" id="5A5B"/>
<dbReference type="PDBsum" id="5AHJ"/>
<dbReference type="PDBsum" id="5BOU"/>
<dbReference type="PDBsum" id="5BXL"/>
<dbReference type="PDBsum" id="5BXN"/>
<dbReference type="PDBsum" id="5CGF"/>
<dbReference type="PDBsum" id="5CGG"/>
<dbReference type="PDBsum" id="5CGH"/>
<dbReference type="PDBsum" id="5CGI"/>
<dbReference type="PDBsum" id="5CZ4"/>
<dbReference type="PDBsum" id="5CZ5"/>
<dbReference type="PDBsum" id="5CZ6"/>
<dbReference type="PDBsum" id="5CZ7"/>
<dbReference type="PDBsum" id="5CZ8"/>
<dbReference type="PDBsum" id="5CZ9"/>
<dbReference type="PDBsum" id="5CZA"/>
<dbReference type="PDBsum" id="5D0S"/>
<dbReference type="PDBsum" id="5D0T"/>
<dbReference type="PDBsum" id="5D0V"/>
<dbReference type="PDBsum" id="5D0W"/>
<dbReference type="PDBsum" id="5D0X"/>
<dbReference type="PDBsum" id="5D0Z"/>
<dbReference type="PDBsum" id="5DKI"/>
<dbReference type="PDBsum" id="5DKJ"/>
<dbReference type="PDBsum" id="5FG7"/>
<dbReference type="PDBsum" id="5FG9"/>
<dbReference type="PDBsum" id="5FGA"/>
<dbReference type="PDBsum" id="5FGD"/>
<dbReference type="PDBsum" id="5FGE"/>
<dbReference type="PDBsum" id="5FGF"/>
<dbReference type="PDBsum" id="5FGG"/>
<dbReference type="PDBsum" id="5FGH"/>
<dbReference type="PDBsum" id="5FGI"/>
<dbReference type="PDBsum" id="5FHS"/>
<dbReference type="PDBsum" id="5JHR"/>
<dbReference type="PDBsum" id="5JHS"/>
<dbReference type="PDBsum" id="5L52"/>
<dbReference type="PDBsum" id="5L54"/>
<dbReference type="PDBsum" id="5L55"/>
<dbReference type="PDBsum" id="5L5A"/>
<dbReference type="PDBsum" id="5L5B"/>
<dbReference type="PDBsum" id="5L5D"/>
<dbReference type="PDBsum" id="5L5E"/>
<dbReference type="PDBsum" id="5L5F"/>
<dbReference type="PDBsum" id="5L5H"/>
<dbReference type="PDBsum" id="5L5I"/>
<dbReference type="PDBsum" id="5L5J"/>
<dbReference type="PDBsum" id="5L5O"/>
<dbReference type="PDBsum" id="5L5P"/>
<dbReference type="PDBsum" id="5L5Q"/>
<dbReference type="PDBsum" id="5L5R"/>
<dbReference type="PDBsum" id="5L5S"/>
<dbReference type="PDBsum" id="5L5T"/>
<dbReference type="PDBsum" id="5L5U"/>
<dbReference type="PDBsum" id="5L5V"/>
<dbReference type="PDBsum" id="5L5W"/>
<dbReference type="PDBsum" id="5L5X"/>
<dbReference type="PDBsum" id="5L5Y"/>
<dbReference type="PDBsum" id="5L5Z"/>
<dbReference type="PDBsum" id="5L60"/>
<dbReference type="PDBsum" id="5L61"/>
<dbReference type="PDBsum" id="5L62"/>
<dbReference type="PDBsum" id="5L63"/>
<dbReference type="PDBsum" id="5L64"/>
<dbReference type="PDBsum" id="5L65"/>
<dbReference type="PDBsum" id="5L66"/>
<dbReference type="PDBsum" id="5L67"/>
<dbReference type="PDBsum" id="5L68"/>
<dbReference type="PDBsum" id="5L69"/>
<dbReference type="PDBsum" id="5L6A"/>
<dbReference type="PDBsum" id="5L6B"/>
<dbReference type="PDBsum" id="5L6C"/>
<dbReference type="PDBsum" id="5LAI"/>
<dbReference type="PDBsum" id="5LAJ"/>
<dbReference type="PDBsum" id="5LTT"/>
<dbReference type="PDBsum" id="5M2B"/>
<dbReference type="PDBsum" id="5MP9"/>
<dbReference type="PDBsum" id="5MPA"/>
<dbReference type="PDBsum" id="5MPB"/>
<dbReference type="PDBsum" id="5MPC"/>
<dbReference type="PDBsum" id="5NIF"/>
<dbReference type="PDBsum" id="5WVI"/>
<dbReference type="PDBsum" id="5WVK"/>
<dbReference type="PDBsum" id="6EF0"/>
<dbReference type="PDBsum" id="6EF1"/>
<dbReference type="PDBsum" id="6EF2"/>
<dbReference type="PDBsum" id="6EF3"/>
<dbReference type="PDBsum" id="6FVT"/>
<dbReference type="PDBsum" id="6FVU"/>
<dbReference type="PDBsum" id="6FVV"/>
<dbReference type="PDBsum" id="6FVW"/>
<dbReference type="PDBsum" id="6FVX"/>
<dbReference type="PDBsum" id="6FVY"/>
<dbReference type="PDBsum" id="6G7F"/>
<dbReference type="PDBsum" id="6G8M"/>
<dbReference type="PDBsum" id="6G8N"/>
<dbReference type="PDBsum" id="6GOP"/>
<dbReference type="PDBsum" id="6H39"/>
<dbReference type="PDBsum" id="6HTB"/>
<dbReference type="PDBsum" id="6HTC"/>
<dbReference type="PDBsum" id="6HTD"/>
<dbReference type="PDBsum" id="6HTP"/>
<dbReference type="PDBsum" id="6HTR"/>
<dbReference type="PDBsum" id="6HUB"/>
<dbReference type="PDBsum" id="6HUC"/>
<dbReference type="PDBsum" id="6HUQ"/>
<dbReference type="PDBsum" id="6HUU"/>
<dbReference type="PDBsum" id="6HUV"/>
<dbReference type="PDBsum" id="6HV3"/>
<dbReference type="PDBsum" id="6HV4"/>
<dbReference type="PDBsum" id="6HV5"/>
<dbReference type="PDBsum" id="6HV7"/>
<dbReference type="PDBsum" id="6HVA"/>
<dbReference type="PDBsum" id="6HVR"/>
<dbReference type="PDBsum" id="6HVS"/>
<dbReference type="PDBsum" id="6HVT"/>
<dbReference type="PDBsum" id="6HVU"/>
<dbReference type="PDBsum" id="6HVV"/>
<dbReference type="PDBsum" id="6HVW"/>
<dbReference type="PDBsum" id="6HVX"/>
<dbReference type="PDBsum" id="6HVY"/>
<dbReference type="PDBsum" id="6HW0"/>
<dbReference type="PDBsum" id="6HW3"/>
<dbReference type="PDBsum" id="6HW4"/>
<dbReference type="PDBsum" id="6HW5"/>
<dbReference type="PDBsum" id="6HW6"/>
<dbReference type="PDBsum" id="6HW7"/>
<dbReference type="PDBsum" id="6HW8"/>
<dbReference type="PDBsum" id="6HW9"/>
<dbReference type="PDBsum" id="6HWA"/>
<dbReference type="PDBsum" id="6HWB"/>
<dbReference type="PDBsum" id="6HWC"/>
<dbReference type="PDBsum" id="6HWD"/>
<dbReference type="PDBsum" id="6HWE"/>
<dbReference type="PDBsum" id="6HWF"/>
<dbReference type="PDBsum" id="6J2C"/>
<dbReference type="PDBsum" id="6J2N"/>
<dbReference type="PDBsum" id="6J2Q"/>
<dbReference type="PDBsum" id="6J2X"/>
<dbReference type="PDBsum" id="6J30"/>
<dbReference type="PDBsum" id="6ZOU"/>
<dbReference type="PDBsum" id="6ZP6"/>
<dbReference type="PDBsum" id="6ZP8"/>
<dbReference type="PDBsum" id="7LS5"/>
<dbReference type="PDBsum" id="7LS6"/>
<dbReference type="PDBsum" id="7LSX"/>
<dbReference type="PDBsum" id="7O2L"/>
<dbReference type="PDBsum" id="7QO3"/>
<dbReference type="PDBsum" id="7QO5"/>
<dbReference type="PDBsum" id="7TEJ"/>
<dbReference type="PDBsum" id="7TEO"/>
<dbReference type="PDBsum" id="8BW1"/>
<dbReference type="PDBsum" id="8OHZ"/>
<dbReference type="PDBsum" id="8OI1"/>
<dbReference type="PDBsum" id="8OLR"/>
<dbReference type="PDBsum" id="8RHJ"/>
<dbReference type="PDBsum" id="8RHK"/>
<dbReference type="PDBsum" id="8RHL"/>
<dbReference type="PDBsum" id="8RVL"/>
<dbReference type="PDBsum" id="8RVO"/>
<dbReference type="PDBsum" id="8RVP"/>
<dbReference type="PDBsum" id="8RVQ"/>
<dbReference type="PDBsum" id="8T08"/>
<dbReference type="PDBsum" id="8T0M"/>
<dbReference type="PDBsum" id="8U6Y"/>
<dbReference type="PDBsum" id="8U7U"/>
<dbReference type="PDBsum" id="9D0T"/>
<dbReference type="PDBsum" id="9EY9"/>
<dbReference type="PDBsum" id="9FST"/>
<dbReference type="PDBsum" id="9FSV"/>
<dbReference type="PDBsum" id="9FT0"/>
<dbReference type="PDBsum" id="9FT1"/>
<dbReference type="PDBsum" id="9GBK"/>
<dbReference type="EMDB" id="EMD-14082"/>
<dbReference type="EMDB" id="EMD-14084"/>
<dbReference type="EMDB" id="EMD-19523"/>
<dbReference type="EMDB" id="EMD-19527"/>
<dbReference type="EMDB" id="EMD-19528"/>
<dbReference type="EMDB" id="EMD-19529"/>
<dbReference type="EMDB" id="EMD-23502"/>
<dbReference type="EMDB" id="EMD-23503"/>
<dbReference type="EMDB" id="EMD-23508"/>
<dbReference type="EMDB" id="EMD-25847"/>
<dbReference type="EMDB" id="EMD-25848"/>
<dbReference type="EMDB" id="EMD-3534"/>
<dbReference type="EMDB" id="EMD-3535"/>
<dbReference type="EMDB" id="EMD-3536"/>
<dbReference type="EMDB" id="EMD-3537"/>
<dbReference type="EMDB" id="EMD-40938"/>
<dbReference type="EMDB" id="EMD-40944"/>
<dbReference type="EMDB" id="EMD-41963"/>
<dbReference type="EMDB" id="EMD-41993"/>
<dbReference type="EMDB" id="EMD-4321"/>
<dbReference type="EMDB" id="EMD-4322"/>
<dbReference type="EMDB" id="EMD-4323"/>
<dbReference type="EMDB" id="EMD-4324"/>
<dbReference type="EMDB" id="EMD-46461"/>
<dbReference type="EMDB" id="EMD-51221"/>
<dbReference type="EMDB" id="EMD-6693"/>
<dbReference type="EMDB" id="EMD-6694"/>
<dbReference type="EMDB" id="EMD-9042"/>
<dbReference type="EMDB" id="EMD-9043"/>
<dbReference type="EMDB" id="EMD-9044"/>
<dbReference type="EMDB" id="EMD-9045"/>
<dbReference type="EMDB" id="EMD-9769"/>
<dbReference type="EMDB" id="EMD-9770"/>
<dbReference type="EMDB" id="EMD-9771"/>
<dbReference type="EMDB" id="EMD-9772"/>
<dbReference type="EMDB" id="EMD-9773"/>
<dbReference type="SMR" id="P21242"/>
<dbReference type="BioGRID" id="34747">
    <property type="interactions" value="483"/>
</dbReference>
<dbReference type="ComplexPortal" id="CPX-2262">
    <property type="entry name" value="26S proteasome complex"/>
</dbReference>
<dbReference type="DIP" id="DIP-1526N"/>
<dbReference type="FunCoup" id="P21242">
    <property type="interactions" value="1538"/>
</dbReference>
<dbReference type="IntAct" id="P21242">
    <property type="interactions" value="56"/>
</dbReference>
<dbReference type="MINT" id="P21242"/>
<dbReference type="STRING" id="4932.YOR362C"/>
<dbReference type="iPTMnet" id="P21242"/>
<dbReference type="PaxDb" id="4932-YOR362C"/>
<dbReference type="PeptideAtlas" id="P21242"/>
<dbReference type="EnsemblFungi" id="YOR362C_mRNA">
    <property type="protein sequence ID" value="YOR362C"/>
    <property type="gene ID" value="YOR362C"/>
</dbReference>
<dbReference type="GeneID" id="854544"/>
<dbReference type="KEGG" id="sce:YOR362C"/>
<dbReference type="AGR" id="SGD:S000005889"/>
<dbReference type="SGD" id="S000005889">
    <property type="gene designation" value="PRE10"/>
</dbReference>
<dbReference type="VEuPathDB" id="FungiDB:YOR362C"/>
<dbReference type="eggNOG" id="KOG0184">
    <property type="taxonomic scope" value="Eukaryota"/>
</dbReference>
<dbReference type="GeneTree" id="ENSGT00550000074912"/>
<dbReference type="HOGENOM" id="CLU_035750_0_1_1"/>
<dbReference type="InParanoid" id="P21242"/>
<dbReference type="OMA" id="RVSMYMH"/>
<dbReference type="OrthoDB" id="40134at2759"/>
<dbReference type="BioCyc" id="YEAST:G3O-33832-MONOMER"/>
<dbReference type="Reactome" id="R-SCE-1236978">
    <property type="pathway name" value="Cross-presentation of soluble exogenous antigens (endosomes)"/>
</dbReference>
<dbReference type="Reactome" id="R-SCE-5668541">
    <property type="pathway name" value="TNFR2 non-canonical NF-kB pathway"/>
</dbReference>
<dbReference type="Reactome" id="R-SCE-5687128">
    <property type="pathway name" value="MAPK6/MAPK4 signaling"/>
</dbReference>
<dbReference type="Reactome" id="R-SCE-5689880">
    <property type="pathway name" value="Ub-specific processing proteases"/>
</dbReference>
<dbReference type="Reactome" id="R-SCE-68949">
    <property type="pathway name" value="Orc1 removal from chromatin"/>
</dbReference>
<dbReference type="Reactome" id="R-SCE-69017">
    <property type="pathway name" value="CDK-mediated phosphorylation and removal of Cdc6"/>
</dbReference>
<dbReference type="Reactome" id="R-SCE-69601">
    <property type="pathway name" value="Ubiquitin Mediated Degradation of Phosphorylated Cdc25A"/>
</dbReference>
<dbReference type="Reactome" id="R-SCE-8854050">
    <property type="pathway name" value="FBXL7 down-regulates AURKA during mitotic entry and in early mitosis"/>
</dbReference>
<dbReference type="Reactome" id="R-SCE-8948751">
    <property type="pathway name" value="Regulation of PTEN stability and activity"/>
</dbReference>
<dbReference type="Reactome" id="R-SCE-8951664">
    <property type="pathway name" value="Neddylation"/>
</dbReference>
<dbReference type="Reactome" id="R-SCE-9755511">
    <property type="pathway name" value="KEAP1-NFE2L2 pathway"/>
</dbReference>
<dbReference type="Reactome" id="R-SCE-983168">
    <property type="pathway name" value="Antigen processing: Ubiquitination &amp; Proteasome degradation"/>
</dbReference>
<dbReference type="Reactome" id="R-SCE-9907900">
    <property type="pathway name" value="Proteasome assembly"/>
</dbReference>
<dbReference type="BioGRID-ORCS" id="854544">
    <property type="hits" value="1 hit in 10 CRISPR screens"/>
</dbReference>
<dbReference type="EvolutionaryTrace" id="P21242"/>
<dbReference type="PRO" id="PR:P21242"/>
<dbReference type="Proteomes" id="UP000002311">
    <property type="component" value="Chromosome XV"/>
</dbReference>
<dbReference type="RNAct" id="P21242">
    <property type="molecule type" value="protein"/>
</dbReference>
<dbReference type="GO" id="GO:0005634">
    <property type="term" value="C:nucleus"/>
    <property type="evidence" value="ECO:0000318"/>
    <property type="project" value="GO_Central"/>
</dbReference>
<dbReference type="GO" id="GO:0000502">
    <property type="term" value="C:proteasome complex"/>
    <property type="evidence" value="ECO:0000353"/>
    <property type="project" value="ComplexPortal"/>
</dbReference>
<dbReference type="GO" id="GO:0019773">
    <property type="term" value="C:proteasome core complex, alpha-subunit complex"/>
    <property type="evidence" value="ECO:0000314"/>
    <property type="project" value="SGD"/>
</dbReference>
<dbReference type="GO" id="GO:0034515">
    <property type="term" value="C:proteasome storage granule"/>
    <property type="evidence" value="ECO:0000314"/>
    <property type="project" value="SGD"/>
</dbReference>
<dbReference type="GO" id="GO:0003729">
    <property type="term" value="F:mRNA binding"/>
    <property type="evidence" value="ECO:0000314"/>
    <property type="project" value="SGD"/>
</dbReference>
<dbReference type="GO" id="GO:0010499">
    <property type="term" value="P:proteasomal ubiquitin-independent protein catabolic process"/>
    <property type="evidence" value="ECO:0000314"/>
    <property type="project" value="SGD"/>
</dbReference>
<dbReference type="GO" id="GO:0043161">
    <property type="term" value="P:proteasome-mediated ubiquitin-dependent protein catabolic process"/>
    <property type="evidence" value="ECO:0000314"/>
    <property type="project" value="SGD"/>
</dbReference>
<dbReference type="CDD" id="cd03751">
    <property type="entry name" value="proteasome_alpha_type_3"/>
    <property type="match status" value="1"/>
</dbReference>
<dbReference type="FunFam" id="3.60.20.10:FF:000044">
    <property type="entry name" value="Probable proteasome subunit alpha type-7"/>
    <property type="match status" value="1"/>
</dbReference>
<dbReference type="Gene3D" id="3.60.20.10">
    <property type="entry name" value="Glutamine Phosphoribosylpyrophosphate, subunit 1, domain 1"/>
    <property type="match status" value="1"/>
</dbReference>
<dbReference type="InterPro" id="IPR029055">
    <property type="entry name" value="Ntn_hydrolases_N"/>
</dbReference>
<dbReference type="InterPro" id="IPR050115">
    <property type="entry name" value="Proteasome_alpha"/>
</dbReference>
<dbReference type="InterPro" id="IPR023332">
    <property type="entry name" value="Proteasome_alpha-type"/>
</dbReference>
<dbReference type="InterPro" id="IPR000426">
    <property type="entry name" value="Proteasome_asu_N"/>
</dbReference>
<dbReference type="InterPro" id="IPR001353">
    <property type="entry name" value="Proteasome_sua/b"/>
</dbReference>
<dbReference type="PANTHER" id="PTHR11599">
    <property type="entry name" value="PROTEASOME SUBUNIT ALPHA/BETA"/>
    <property type="match status" value="1"/>
</dbReference>
<dbReference type="Pfam" id="PF00227">
    <property type="entry name" value="Proteasome"/>
    <property type="match status" value="1"/>
</dbReference>
<dbReference type="Pfam" id="PF10584">
    <property type="entry name" value="Proteasome_A_N"/>
    <property type="match status" value="1"/>
</dbReference>
<dbReference type="SMART" id="SM00948">
    <property type="entry name" value="Proteasome_A_N"/>
    <property type="match status" value="1"/>
</dbReference>
<dbReference type="SUPFAM" id="SSF56235">
    <property type="entry name" value="N-terminal nucleophile aminohydrolases (Ntn hydrolases)"/>
    <property type="match status" value="1"/>
</dbReference>
<dbReference type="PROSITE" id="PS00388">
    <property type="entry name" value="PROTEASOME_ALPHA_1"/>
    <property type="match status" value="1"/>
</dbReference>
<dbReference type="PROSITE" id="PS51475">
    <property type="entry name" value="PROTEASOME_ALPHA_2"/>
    <property type="match status" value="1"/>
</dbReference>